<gene>
    <name type="primary">rep</name>
    <name type="ORF">1a-1b</name>
</gene>
<keyword id="KW-1072">Activation of host autophagy by virus</keyword>
<keyword id="KW-0067">ATP-binding</keyword>
<keyword id="KW-1132">Decay of host mRNAs by virus</keyword>
<keyword id="KW-1015">Disulfide bond</keyword>
<keyword id="KW-0255">Endonuclease</keyword>
<keyword id="KW-1262">Eukaryotic host gene expression shutoff by virus</keyword>
<keyword id="KW-1193">Eukaryotic host translation shutoff by virus</keyword>
<keyword id="KW-0269">Exonuclease</keyword>
<keyword id="KW-0347">Helicase</keyword>
<keyword id="KW-1035">Host cytoplasm</keyword>
<keyword id="KW-1190">Host gene expression shutoff by virus</keyword>
<keyword id="KW-1043">Host membrane</keyword>
<keyword id="KW-1192">Host mRNA suppression by virus</keyword>
<keyword id="KW-0945">Host-virus interaction</keyword>
<keyword id="KW-0378">Hydrolase</keyword>
<keyword id="KW-1090">Inhibition of host innate immune response by virus</keyword>
<keyword id="KW-1114">Inhibition of host interferon signaling pathway by virus</keyword>
<keyword id="KW-1095">Inhibition of host ISG15 by virus</keyword>
<keyword id="KW-1100">Inhibition of host NF-kappa-B by virus</keyword>
<keyword id="KW-0922">Interferon antiviral system evasion</keyword>
<keyword id="KW-0456">Lyase</keyword>
<keyword id="KW-0464">Manganese</keyword>
<keyword id="KW-0472">Membrane</keyword>
<keyword id="KW-0479">Metal-binding</keyword>
<keyword id="KW-0489">Methyltransferase</keyword>
<keyword id="KW-1127">Modulation of host ubiquitin pathway by viral deubiquitinase</keyword>
<keyword id="KW-1130">Modulation of host ubiquitin pathway by virus</keyword>
<keyword id="KW-0540">Nuclease</keyword>
<keyword id="KW-0547">Nucleotide-binding</keyword>
<keyword id="KW-0548">Nucleotidyltransferase</keyword>
<keyword id="KW-0645">Protease</keyword>
<keyword id="KW-0677">Repeat</keyword>
<keyword id="KW-0688">Ribosomal frameshifting</keyword>
<keyword id="KW-0694">RNA-binding</keyword>
<keyword id="KW-0696">RNA-directed RNA polymerase</keyword>
<keyword id="KW-0788">Thiol protease</keyword>
<keyword id="KW-0808">Transferase</keyword>
<keyword id="KW-0812">Transmembrane</keyword>
<keyword id="KW-1133">Transmembrane helix</keyword>
<keyword id="KW-0833">Ubl conjugation pathway</keyword>
<keyword id="KW-0899">Viral immunoevasion</keyword>
<keyword id="KW-0693">Viral RNA replication</keyword>
<keyword id="KW-0862">Zinc</keyword>
<keyword id="KW-0863">Zinc-finger</keyword>
<sequence length="7071" mass="790103">MESLVLGINEKTHVQLSLPVLQVRDVLVRGFGDSVEEALSEAREHLKSGTCGIVELEKGVLPQPEQPYVFIKRSDAQGTDHGHRVRELVAELDGVQYGRSGITLGVLVPHVGETPIAYRNVLLRKNGNKGAGGHSFGIDLKSYDLGDELGTDPIEDYEQNWNTKHGSGVLRELTRELNGGALTRYVDNNFCGPDGYPLECIKDLLARAGKSMCTLSEQLDYIESKRGVYCCRDHGHEIAWFTERSDKSYEHQTPFEIKSAKKFDTFKGECPKFVFPLNSKVKVIQPRVEKKKTEGFMGRIRSVYPVATPQECNNMHLSTLMKCNHCDEVSWQTCDFLKATCEQCGTENLVSEGPNTCGYLPTNAVVKMPCPACQDPEIGPEHSAADYHNHSNIETRLRKGGRTRCFGGCVFAYVGCYNKRAYWVPRASADIGSGHTGITGDNVETLNEDLLEILSRERVNINIVGDFQLNEEVAIILASFSASTSAFIDTIKSLDYKSFKTIVESCGNYKVTKGKPIKGAWNIGQHRSVLTPLCGFPSQAAGVIRSIFSRTLDAANHSIPDLQRAAVTILDSISEQSLRLVDAMVYTSNLLTNSVIIMAYVTGGLVQQTSQWLSNLLDTTVEKLRPIFAWIEAKLSAGVEFLKDAWEILKFLITGVFDIVKGQIQVASDNIKDCVKCFVDVVNKALEMCIDQVTIAGAKLRSLNLGEVFIAQSKGLYRQCIRGKEQLQLLMPLKAPKEVTFLEGDSHDTVLTSEEVVLKNGELEALETPVDSFTNGAVVGTPVCINGLMLLEIKANEQYCALSPGLLATNNVFRLKGGAPTKGVTFGEDTVVEVQGYKNVRITFELDERVDKVLNEKCSVYTVESGTEVTEFACVVAEAVVKTLQPVSDLLTNMGIDLDEWSVATFYLFDDSGEEKLSSRMYCSFYPPDEEEDCEEYEEEEEVSERTCEHEYGTEEDYKGLPLEFGASTDIIQVEEQEEEDWLDDAVEAEPEPEPLHEEPVNQLTGYLKLTDNVAIKCVDIVEEAQNANPMVIVNAANIHLKHGGGVAGALNKATNGAMQKESDHYIKLNGPLTVGGSCLLSGHNLAKKCLHVVGPNLNAGEDIQLLKAAYENFNSQDILLAPLLSAGIFGAKPLQSLQMCVQTVRTQVYIVVNDKVLYEQVVMDYLDSLKPKVEAPKQEVLPKAEYPKVDEKSVVQKTIDVKPKIKACIDEVTTTLEETKFLTNKLLLFTDINGKLYQDSKNMLRGEDMSFLEKDAPYMVGDVITSGDITCVVIPSKKAGGTTEMLSRALKKVPINEYITTYPGQGCAGYTLEEAKTALKKCKSAFYVLPSETPNAKEEILGTVSWNLREMLAHAEETRKLMPVCMDVRAIMATIQRKYKGIKIQEGIVDYGVRFFFYTSKEPVASIITKLNSLNEPLVTMPIGYVTHGFNLEEAARCMRSLKAPAIVSVSSPDAVTTYNGYLTSSSKTSEDHFVETVSLAGSYRDWSYSGQRTELGVEFLKRGEKIVYHTLESPVKFHLDGEVLPLDKLKSLLSLREVKTIKVFTTVDNTNLHTQLVDMSMTYGQQLGPTYLEGADVTKIKPHVNHEGKTFFVLPSDDTLRSEAFEYYHTLDESFLGRYMSALNHTKKWKFPQVGGLTSIKWADNNCYLSSVLLALQQIEVKFNAPALQEAYYRARAGDAANFCALILAYSNKTVGELGDVRETMTHLLQHANLESAKRVLNVVCKHCGQKTTTLTGVEAVMYMGTLSYDNLKMGVSIPCVCGRDATQYLVQQESSFVMMSAPPAEYKLQQGTFLCANEYTGNYQCGHYTHITAKETLYRIDGAHLTKMSEYKGPVTDVFYKETSYTTTIKPVSYKLDGVTYTEIEPKLDGYYKKDNAYYTEQPIDLIPTQPLPNASFDNFKLTCSNTKFADDLNQMTGFTKPASRELSVTFFPDLNGDVVAIDYRHYSASFKKGAKLLHKPIVWHINQATTKTTFKPNTWCLRCLWSTKPVDTSNSFEVLAVEDTQGMDNLACESQQPTPEEVVENPTIQKEVIECDVKTTEVVGNVILKPSDEGVKVTQELDHEDLMAAYVENTSITIKKPNELSLALGLKTIATHGIAAINSVPWGKILAYVKPFLGQAAVTTSNCAKRLVQRMFNNYMPYVLTLLFQLCTFTKSTNSRIRASLPTTIAKNSVRGIVRLCLDAGINYVKSPKFSKLFTIAMWLLLLSICLGSLIYVTAALGVLLSNFGAPSYCSGVRESYLNSSNVTTMDFCEGSFPCSVCLSGLDSLDSYPALETIQVTISSYKLDLTILGLAAEWFFAYMLFTKFFYLLGLSAIMQVFFGYFASHFISNSWLMWFIISIVQMAPVSAMVRMYIFFASFYYIWKSYVHIMDGCTSSTCMMCYKRNRATRVECTTIVNGMKRSFYVYANGGRGFCKTHNWNCLNCDTFCAGSTFISDEVARDLSLQFKRPINPTDQSSYVVDSVAVKNGALHLYFDKAGQKTYERHPLSHFVNLDNLRANNTKGSLPINVIVFDGKSKCDESAAKSASVYYSQLMCQPILLLDQALVSDVGDSTEVSVKMFDAYVDTFSATFSVPMEKLKALVATAHSELAKGVALDGVLSTFVSASRQGVVDTDVDTKDVIECLKLSHHSDLEVTGDSCNNFMLTYNKVENMTPRDLGACIDCNARHINAQVARSHNVSLIWNVKDYMSLSEQLRKQIRSAAKKNNIPFRLTCATTRQVVNVITTKISLKGGKIVSTWFKIMLKATLLCVLAALVCYIVMPVHILSVHGGYTNEIIGYKAIQDGVTRDIVSTDDCFANKHAGFDSWFSQRGGSYKNDKSCPVVAAIITREIGFIVPGLPGTVLRAINGDFLHFLPRVFSAVGNICYTPSKLIEYSDFSTSACVLAAECTIFKDAMGKPVPYCYDTNLLEGSISYSELRPDTRYVLMDGSIIQFPNAYLEGSVRVVTTFDAEYCRHGTCERSEAGICLSTSGRWVLNNEHYRALPGVFCGVDAMNLIANIFTPLVQPVGALDVSASVVAGGIIAILVTCAAYYFMKFRRAFGEYNHVVAANAPLFLMSFTILCLAPAYSFLPGVYSVFYLYLTFYFTNDVSFLAHLQWFAMFSPIVPFWITAIYVFCISLKHFHWFFNNYLRKRVVFNGVTFSTFEEAALCTFLLNKEMYLKLRSETLLPLTQYNRYLALYNKYKYFSGALDTTSYREAACCHLAKALNDFSNSGADVLYQPPQTSITSAVLQSGFRKMAFPSGKVEGCMVQVTCGTTTLNGLWLDDTVYCPRHVICTAEDMLNPNYEDLLIRKSNHSFLVQAGNVQLRVIGHSMQNCLLRLKVDTSNPKTPKYKFVRIQPGQTFSVLACYNGSPSGVYQCAMRPNHTIKGSFLNGSCGSVGFNIDYDCVSFCYMHHMELPTEVHAGTDLEGKFYGPFVDRQTAQAAGTDTTITLNVLAWLYAAVINGDRWFLNRFTTTLNDFNLVAMKYNYEPLTQDHVDILGPLSAQTGIAVLDMCAALKELLQNGMNGRTILGSTILEDEFTPFDVVRQCSGVTFQGKFKRIVKGTHHWMLLTFLTSLLILVQSTQWSLFFFVYENAFLPFTLGIMAVAACAMLLVKHKHAFLCLFLLPSLATVAYFNMVYMPASWVMRIMTWLELADTSLSGYRLKDCVMYASALVLLVLMTARTVYDDAARRVWTLMNVITLVYKVYYGNALDQAISMWALVISVTSNYSGVVTTIMFLARAIVFVCVEYYPLLFITGNTLQCIMLVYCFLGYCCCCYFGLFCLLNRYFRLTLGVYDYLVSTQEFRYMNSQGLLPPKSSIDAFKLNIKLLGIGGKPCIKVATVQSKMSDVKCTSVVLLSVLQQLRVESSSKLWAQCVQLHNDILLAKDTTEAFEKMVSLLSVLLSMQGAVDINKLCEEMLDNRATLQAIASEFSSLPSYAAYATAQEAYEQAVANGDSEVVLKKLKKSLNVAKSEFDRNAAMQRKLEKMADQAMTQMYKQARSEDKRAKVTSAMQTMLFTMLRKLDNDALNNIINNARDGCVPLNIIPLTTAAKLMVVVPDYGTYKNTCDGNTFTYASALWEIQQVVDADSKIVQLSEINMENSSNLAWPLIVTALRANSAVKLQNNELSPVALRQMSCAAGTTQTACTDDNALAYYNNSKGGRFVLALLSDHQDLKWARFPKSDGTGTIYTELEPPCRFVTDTPKGPKVKYLHFIKGLNNLNRGMVLGSLAATVRLQAGNATEVPANSTVLSFCAFAVDPAKAYKDYLASGGQPITNCVKMLCTHTGTGQAITVTPEANMDQESFGGASCCLYCRCHIDHPNPKGFCDLKGKYVQIPTTCANDPVGFTLRNTVCTVCGMWKGYGCSCDQLREPMMQSADASTFLNRVCGVSAARLTPCGTGISTDVVYRAFDIYNEKVAGFAKFLKTNCCRFQEKDEEGNLLDSYFVVKRHTMSNYQHEETIYNLVKDCPAVAVHDFFKFRVDGDMVPHISRQRLTKYTMADLVYALRHFDEGNCDTLKEILVTYNCCDDDYFNKKDWYDFVENPDILRVYANLGERVRQALLKTVQFCDAMRDAGIVGVLTLDNQDLNGNWYDFGDFVQVAPGCGVPIVDSYYSLLMPILTLTRALAAESHMDADLAKPLIKWDLLKYDFTAERLCLFDRYFKYWDQTYHPNCINCLDDRCILHCANFNVLFSTVFPPTSFGPLVRKIFVDGVPFVVSTGYHFRELGVVHNQDVNLHSSRLSFKELLVYAADPAMHAASGNLLLDKRTTCFSVAALTNNVAFQTVKPGNFNKDFYDFAVSKGFFKEGSSVELKHFFFAQDGNAAISDYDYYRYNLPTMCDIRQLLFVVEVVDKYFDCYDGGCINANQVIVNNLDKSAGFPFNKWGKARLYYDSMSYEDQDALFAYTKRNVIPTITQMNLKYAISAKNRARTVAGVSICSTMTNRQFHQKLLKSIAATRGATVVIGTSKFYGGWHNMLKTVYSDVETPHLMGWDYPKCDRAMPNMLRIMASLVLARKHSTCCNLSHRFYRLANECAQVLSEMVMCGGSLYVKPGGTSSGDATTAYANSVFNICQAVTANVNALLSTDGNKIADKYVRNLQHRLYECLYRNRDVDHEFVGEFYAYLRKHFSMMILSDDAVVCYNSNYAAQGLVASIKNFKAVLYYQNNVFMSEAKCWTETDLTKGPHEFCSQHTMLVKQGDDYVYLPYPDPSRILGAGCFVDDIVKTDGTLMIERFVSLAIDAYPLTKHPNQEYADVFHLYLQYIRKLHDELTGHMLDMYSVMLTNDNTSRYWEPEFYEAMYTPHTVLQAVGACVLCNSQTSLRCGACIRRPFLCCKCCYDHVISTSHKLVLSVNPYVCNAPGCDVTDVTQLYLGGMSYYCKSHKPPISFPLCANGQVFGLYKNTCVGSDNVTDFNAIATCDWTNAGDYILANTCTERLKLFAAETLKATEETFKLSYGIATVREVLSDRELHLSWEVGKPRPPLNRNYVFTGYRVTKNSKVQIGEYTFEKGDYGDAVVYRGTTTYKLNIGDYFVLTSHTVMPLSAPTLVPQEHYVRITGLYPTLNISDEFSSNVANYQKVGMQKYSTLQGPPGTGKSHFAIGLALYYPSARIVYTACSHAAVDALCEKALKYLPIDKCSRIIPARARVECFDKFKVNSTLEQYVFCTVNALPETTADIVVFDEISMATNYDLSVVNARLRAKHYVYIGDPAQLPAPRTLLTKGTLEPEYFNSVCRLMKTIGPDMFLGTCRRCPAEIVDTVSALVYDNKLKAHKEKSAQCFKMFYKGVITHDVSSAINRPQIGVVREFLTRNPAWRKAVFISPYNSQNAVASKILGLPTQTVDSSQGSEYDYVIFTQTTETAHSCNVNRFNVAITRAKIGILCIMSDRDLYDKLQFTSLEVPRRNVATLQAENVTGLFKDCSKIITGLHPTQAPTHLSVDTKFKTEGLCVDIPGIPKDMTYRRLISMMGFKMNYQVNGYPNMFITREEAIRHVRAWIGFDVEGCHATRDAVGTNLPLQLGFSTGVNLVAIPTGYVDTENNTEFTRVNAKPPPGDQFKHLIPLMYKGLPWNVVRIKIVQMLSDTLKGLSDRVVFVLWAHGFELTSMKYFVKIGPERTCCLCDKRATCFSTSSDTYACWNHSVGFDYVYNPFMIDVQQWGFTGNLQSNHDQHCQVHGNAHVASCDAIMTRCLAVHECFVKRVDWSVEYPIIGDELKINSACRKVQHMVVKSALLADKFPVLHDIGNPKAIKCVPQAEVEWKFYDAQPCSDKAYKIEELFYSYATHHDKFTDGVCLFWNCNVDRYPANAIVCRFDTRVLSNLNLPGCDGGSLYVNKHAFHTPAFDKSAFTNLKQLPFFYYSDSPCESHGKQVVSDIDYVPLKSATCITRCNLGGAVCRHHANEYRQYLDAYNMMISAGFSLWIYKQFDTYNLWNTFTRLQSLENVAYNVVNKGHFDGQAGETPVSIINNAVYTKVDGFDVEIFENKTTLPVNVAFELWAKRNIKSVPEIKILNNLGVDIAANTVIWDHKREAPVHMSTIGVCTMTDIAKKPTESACSSLTVLFDGRVEGQVDLFRNARNGVLITEGSVKGLTPSKGPAQASVNGVTLIGESVKTQFNYFKKVDGIIQQLPETYFTQSRDLEDFKPRSQMETDFLELAMDEFIQRYKLEGYAFEHIVYGDFSHGQLGGLHLMIGLAKRSRDSPLKLEDFIPMDSTVKNYFITDAQTGSSKCVCSVIDLLLDDFVEIIKSQDLSVVSKVVKVTIDYAEISFMLWCKDGHVETFYPKLQASQAWQPGVAMPNLYKMQRMLLEKCDLQNYGENAVIPKGIMMNVAKYTQLCQYLNTLTLAVPYNMRVIHFGAGSDKGVAPGTAVLRQWLPTGTLLVDSDLNDFVSDADSTLIGDCATVHTANKWDLIVSDMYDPKAKHVTKENDSKEGFFTYLCGFIKQKLALGGSVAVKITEHSWNADLYKLMGHFSWWTAFVTNVNASSSEAFLIGVNYLGKPKEQIDGYTMHANYIFWRNTNPIQLSSYSLFDMSKFPLKLRGTAVMSLKENQINDMIYSLLEKGRLIIRENNRVVVSSDILVNN</sequence>
<reference key="1">
    <citation type="journal article" date="2005" name="Science">
        <title>Bats are natural reservoirs of SARS-like coronaviruses.</title>
        <authorList>
            <person name="Li W."/>
            <person name="Shi Z."/>
            <person name="Yu M."/>
            <person name="Ren W."/>
            <person name="Smith C."/>
            <person name="Epstein J.H."/>
            <person name="Wang H."/>
            <person name="Crameri G."/>
            <person name="Hu Z."/>
            <person name="Zhang H."/>
            <person name="Zhang J."/>
            <person name="McEachern J."/>
            <person name="Field H."/>
            <person name="Daszak P."/>
            <person name="Eaton B.T."/>
            <person name="Zhang S."/>
            <person name="Wang L.F."/>
        </authorList>
    </citation>
    <scope>NUCLEOTIDE SEQUENCE [GENOMIC RNA]</scope>
</reference>
<evidence type="ECO:0000250" key="1"/>
<evidence type="ECO:0000250" key="2">
    <source>
        <dbReference type="UniProtKB" id="P0C6X7"/>
    </source>
</evidence>
<evidence type="ECO:0000250" key="3">
    <source>
        <dbReference type="UniProtKB" id="P0DTD1"/>
    </source>
</evidence>
<evidence type="ECO:0000255" key="4"/>
<evidence type="ECO:0000255" key="5">
    <source>
        <dbReference type="PROSITE-ProRule" id="PRU00214"/>
    </source>
</evidence>
<evidence type="ECO:0000255" key="6">
    <source>
        <dbReference type="PROSITE-ProRule" id="PRU00444"/>
    </source>
</evidence>
<evidence type="ECO:0000255" key="7">
    <source>
        <dbReference type="PROSITE-ProRule" id="PRU00490"/>
    </source>
</evidence>
<evidence type="ECO:0000255" key="8">
    <source>
        <dbReference type="PROSITE-ProRule" id="PRU00539"/>
    </source>
</evidence>
<evidence type="ECO:0000255" key="9">
    <source>
        <dbReference type="PROSITE-ProRule" id="PRU00772"/>
    </source>
</evidence>
<evidence type="ECO:0000255" key="10">
    <source>
        <dbReference type="PROSITE-ProRule" id="PRU00986"/>
    </source>
</evidence>
<evidence type="ECO:0000255" key="11">
    <source>
        <dbReference type="PROSITE-ProRule" id="PRU01289"/>
    </source>
</evidence>
<evidence type="ECO:0000255" key="12">
    <source>
        <dbReference type="PROSITE-ProRule" id="PRU01290"/>
    </source>
</evidence>
<evidence type="ECO:0000255" key="13">
    <source>
        <dbReference type="PROSITE-ProRule" id="PRU01291"/>
    </source>
</evidence>
<evidence type="ECO:0000255" key="14">
    <source>
        <dbReference type="PROSITE-ProRule" id="PRU01292"/>
    </source>
</evidence>
<evidence type="ECO:0000255" key="15">
    <source>
        <dbReference type="PROSITE-ProRule" id="PRU01293"/>
    </source>
</evidence>
<evidence type="ECO:0000255" key="16">
    <source>
        <dbReference type="PROSITE-ProRule" id="PRU01294"/>
    </source>
</evidence>
<evidence type="ECO:0000255" key="17">
    <source>
        <dbReference type="PROSITE-ProRule" id="PRU01295"/>
    </source>
</evidence>
<evidence type="ECO:0000255" key="18">
    <source>
        <dbReference type="PROSITE-ProRule" id="PRU01296"/>
    </source>
</evidence>
<evidence type="ECO:0000255" key="19">
    <source>
        <dbReference type="PROSITE-ProRule" id="PRU01297"/>
    </source>
</evidence>
<evidence type="ECO:0000255" key="20">
    <source>
        <dbReference type="PROSITE-ProRule" id="PRU01298"/>
    </source>
</evidence>
<evidence type="ECO:0000255" key="21">
    <source>
        <dbReference type="PROSITE-ProRule" id="PRU01299"/>
    </source>
</evidence>
<evidence type="ECO:0000255" key="22">
    <source>
        <dbReference type="PROSITE-ProRule" id="PRU01300"/>
    </source>
</evidence>
<evidence type="ECO:0000255" key="23">
    <source>
        <dbReference type="PROSITE-ProRule" id="PRU01303"/>
    </source>
</evidence>
<evidence type="ECO:0000255" key="24">
    <source>
        <dbReference type="PROSITE-ProRule" id="PRU01305"/>
    </source>
</evidence>
<evidence type="ECO:0000255" key="25">
    <source>
        <dbReference type="PROSITE-ProRule" id="PRU01306"/>
    </source>
</evidence>
<evidence type="ECO:0000255" key="26">
    <source>
        <dbReference type="PROSITE-ProRule" id="PRU01307"/>
    </source>
</evidence>
<evidence type="ECO:0000255" key="27">
    <source>
        <dbReference type="PROSITE-ProRule" id="PRU01308"/>
    </source>
</evidence>
<evidence type="ECO:0000255" key="28">
    <source>
        <dbReference type="PROSITE-ProRule" id="PRU01333"/>
    </source>
</evidence>
<evidence type="ECO:0000255" key="29">
    <source>
        <dbReference type="PROSITE-ProRule" id="PRU01334"/>
    </source>
</evidence>
<evidence type="ECO:0000255" key="30">
    <source>
        <dbReference type="PROSITE-ProRule" id="PRU01335"/>
    </source>
</evidence>
<evidence type="ECO:0000255" key="31">
    <source>
        <dbReference type="PROSITE-ProRule" id="PRU01336"/>
    </source>
</evidence>
<evidence type="ECO:0000255" key="32">
    <source>
        <dbReference type="PROSITE-ProRule" id="PRU01337"/>
    </source>
</evidence>
<evidence type="ECO:0000255" key="33">
    <source>
        <dbReference type="PROSITE-ProRule" id="PRU01338"/>
    </source>
</evidence>
<evidence type="ECO:0000255" key="34">
    <source>
        <dbReference type="PROSITE-ProRule" id="PRU01344"/>
    </source>
</evidence>
<evidence type="ECO:0000305" key="35"/>
<feature type="chain" id="PRO_0000043079" description="Host translation inhibitor nsp1" evidence="2">
    <location>
        <begin position="1"/>
        <end position="179"/>
    </location>
</feature>
<feature type="chain" id="PRO_0000043080" description="Non-structural protein 2" evidence="2">
    <location>
        <begin position="180"/>
        <end position="818"/>
    </location>
</feature>
<feature type="chain" id="PRO_0000043081" description="Papain-like proteinase nsp3" evidence="2">
    <location>
        <begin position="819"/>
        <end position="2738"/>
    </location>
</feature>
<feature type="chain" id="PRO_0000283840" description="Non-structural protein 4" evidence="2">
    <location>
        <begin position="2739"/>
        <end position="3238"/>
    </location>
</feature>
<feature type="chain" id="PRO_0000043082" description="3C-like proteinase nsp5" evidence="2">
    <location>
        <begin position="3239"/>
        <end position="3544"/>
    </location>
</feature>
<feature type="chain" id="PRO_0000043083" description="Non-structural protein 6" evidence="2">
    <location>
        <begin position="3545"/>
        <end position="3834"/>
    </location>
</feature>
<feature type="chain" id="PRO_0000043084" description="Non-structural protein 7" evidence="2">
    <location>
        <begin position="3835"/>
        <end position="3917"/>
    </location>
</feature>
<feature type="chain" id="PRO_0000043085" description="Non-structural protein 8" evidence="2">
    <location>
        <begin position="3918"/>
        <end position="4115"/>
    </location>
</feature>
<feature type="chain" id="PRO_0000043086" description="Viral protein genome-linked nsp9" evidence="2">
    <location>
        <begin position="4116"/>
        <end position="4228"/>
    </location>
</feature>
<feature type="chain" id="PRO_0000043087" description="Non-structural protein 10" evidence="2">
    <location>
        <begin position="4229"/>
        <end position="4367"/>
    </location>
</feature>
<feature type="chain" id="PRO_0000043088" description="RNA-directed RNA polymerase nsp12" evidence="2">
    <location>
        <begin position="4368"/>
        <end position="5299"/>
    </location>
</feature>
<feature type="chain" id="PRO_0000043089" description="Helicase nsp13" evidence="2">
    <location>
        <begin position="5300"/>
        <end position="5900"/>
    </location>
</feature>
<feature type="chain" id="PRO_0000043090" description="Guanine-N7 methyltransferase nsp14" evidence="2">
    <location>
        <begin position="5901"/>
        <end position="6427"/>
    </location>
</feature>
<feature type="chain" id="PRO_0000043091" description="Uridylate-specific endoribonuclease nsp15" evidence="2">
    <location>
        <begin position="6428"/>
        <end position="6773"/>
    </location>
</feature>
<feature type="chain" id="PRO_0000043092" description="2'-O-methyltransferase nsp16" evidence="2">
    <location>
        <begin position="6774"/>
        <end position="7071"/>
    </location>
</feature>
<feature type="transmembrane region" description="Helical" evidence="4">
    <location>
        <begin position="2201"/>
        <end position="2221"/>
    </location>
</feature>
<feature type="transmembrane region" description="Helical" evidence="4">
    <location>
        <begin position="2312"/>
        <end position="2334"/>
    </location>
</feature>
<feature type="transmembrane region" description="Helical" evidence="4">
    <location>
        <begin position="2349"/>
        <end position="2369"/>
    </location>
</feature>
<feature type="transmembrane region" description="Helical" evidence="4">
    <location>
        <begin position="2753"/>
        <end position="2773"/>
    </location>
</feature>
<feature type="transmembrane region" description="Helical" evidence="4">
    <location>
        <begin position="3020"/>
        <end position="3040"/>
    </location>
</feature>
<feature type="transmembrane region" description="Helical" evidence="4">
    <location>
        <begin position="3059"/>
        <end position="3079"/>
    </location>
</feature>
<feature type="transmembrane region" description="Helical" evidence="4">
    <location>
        <begin position="3081"/>
        <end position="3101"/>
    </location>
</feature>
<feature type="transmembrane region" description="Helical" evidence="4">
    <location>
        <begin position="3103"/>
        <end position="3123"/>
    </location>
</feature>
<feature type="transmembrane region" description="Helical" evidence="4">
    <location>
        <begin position="3140"/>
        <end position="3160"/>
    </location>
</feature>
<feature type="transmembrane region" description="Helical" evidence="4">
    <location>
        <begin position="3562"/>
        <end position="3582"/>
    </location>
</feature>
<feature type="transmembrane region" description="Helical" evidence="4">
    <location>
        <begin position="3584"/>
        <end position="3604"/>
    </location>
</feature>
<feature type="transmembrane region" description="Helical" evidence="4">
    <location>
        <begin position="3610"/>
        <end position="3630"/>
    </location>
</feature>
<feature type="transmembrane region" description="Helical" evidence="4">
    <location>
        <begin position="3657"/>
        <end position="3676"/>
    </location>
</feature>
<feature type="transmembrane region" description="Helical" evidence="4">
    <location>
        <begin position="3683"/>
        <end position="3702"/>
    </location>
</feature>
<feature type="transmembrane region" description="Helical" evidence="4">
    <location>
        <begin position="3726"/>
        <end position="3746"/>
    </location>
</feature>
<feature type="transmembrane region" description="Helical" evidence="4">
    <location>
        <begin position="3754"/>
        <end position="3774"/>
    </location>
</feature>
<feature type="domain" description="CoV Nsp1 globular" evidence="26">
    <location>
        <begin position="12"/>
        <end position="127"/>
    </location>
</feature>
<feature type="domain" description="BetaCoV Nsp1 C-terminal" evidence="27">
    <location>
        <begin position="148"/>
        <end position="179"/>
    </location>
</feature>
<feature type="domain" description="CoV Nsp2 N-terminal" evidence="28">
    <location>
        <begin position="183"/>
        <end position="456"/>
    </location>
</feature>
<feature type="domain" description="CoV Nsp2 middle" evidence="29">
    <location>
        <begin position="458"/>
        <end position="688"/>
    </location>
</feature>
<feature type="domain" description="CoV Nsp2 C-terminal" evidence="30">
    <location>
        <begin position="690"/>
        <end position="818"/>
    </location>
</feature>
<feature type="domain" description="Ubiquitin-like 1" evidence="5">
    <location>
        <begin position="822"/>
        <end position="930"/>
    </location>
</feature>
<feature type="domain" description="Macro 1" evidence="7">
    <location>
        <begin position="1001"/>
        <end position="1167"/>
    </location>
</feature>
<feature type="domain" description="Macro 2" evidence="7">
    <location>
        <begin position="1205"/>
        <end position="1333"/>
    </location>
</feature>
<feature type="domain" description="Macro 3" evidence="7">
    <location>
        <begin position="1341"/>
        <end position="1468"/>
    </location>
</feature>
<feature type="domain" description="DPUP" evidence="11">
    <location>
        <begin position="1470"/>
        <end position="1536"/>
    </location>
</feature>
<feature type="domain" description="Ubiquitin-like 2" evidence="5">
    <location>
        <begin position="1540"/>
        <end position="1595"/>
    </location>
</feature>
<feature type="domain" description="Peptidase C16" evidence="6">
    <location>
        <begin position="1609"/>
        <end position="1873"/>
    </location>
</feature>
<feature type="domain" description="Nucleic acid-binding" evidence="12">
    <location>
        <begin position="1886"/>
        <end position="1996"/>
    </location>
</feature>
<feature type="domain" description="G2M" evidence="33">
    <location>
        <begin position="2021"/>
        <end position="2130"/>
    </location>
</feature>
<feature type="domain" description="3Ecto" evidence="32">
    <location>
        <begin position="2222"/>
        <end position="2292"/>
    </location>
</feature>
<feature type="domain" description="CoV Nsp3 Y" evidence="31">
    <location>
        <begin position="2370"/>
        <end position="2738"/>
    </location>
</feature>
<feature type="domain" description="Nsp4C" evidence="13">
    <location>
        <begin position="3140"/>
        <end position="3238"/>
    </location>
</feature>
<feature type="domain" description="Peptidase C30" evidence="9">
    <location>
        <begin position="3239"/>
        <end position="3544"/>
    </location>
</feature>
<feature type="domain" description="RdRp Nsp7 cofactor" evidence="16">
    <location>
        <begin position="3835"/>
        <end position="3917"/>
    </location>
</feature>
<feature type="domain" description="RdRp Nsp8 cofactor" evidence="17">
    <location>
        <begin position="3918"/>
        <end position="4115"/>
    </location>
</feature>
<feature type="domain" description="Nsp9 ssRNA-binding" evidence="18">
    <location>
        <begin position="4116"/>
        <end position="4228"/>
    </location>
</feature>
<feature type="domain" description="ExoN/MTase coactivator" evidence="19">
    <location>
        <begin position="4229"/>
        <end position="4367"/>
    </location>
</feature>
<feature type="domain" description="NiRAN" evidence="14">
    <location>
        <begin position="4374"/>
        <end position="4628"/>
    </location>
</feature>
<feature type="domain" description="Nsp12 Interface" evidence="34">
    <location>
        <begin position="4633"/>
        <end position="4731"/>
    </location>
</feature>
<feature type="domain" description="Nsp12 RNA-dependent RNA polymerase" evidence="15">
    <location>
        <begin position="4732"/>
        <end position="5299"/>
    </location>
</feature>
<feature type="domain" description="RdRp catalytic" evidence="8">
    <location>
        <begin position="4979"/>
        <end position="5141"/>
    </location>
</feature>
<feature type="domain" description="CV ZBD" evidence="10">
    <location>
        <begin position="5300"/>
        <end position="5412"/>
    </location>
</feature>
<feature type="domain" description="(+)RNA virus helicase ATP-binding">
    <location>
        <begin position="5556"/>
        <end position="5737"/>
    </location>
</feature>
<feature type="domain" description="(+)RNA virus helicase C-terminal">
    <location>
        <begin position="5738"/>
        <end position="5907"/>
    </location>
</feature>
<feature type="domain" description="ExoN" evidence="20">
    <location>
        <begin position="5972"/>
        <end position="6187"/>
    </location>
</feature>
<feature type="domain" description="N7-MTase" evidence="21">
    <location>
        <begin position="6196"/>
        <end position="6427"/>
    </location>
</feature>
<feature type="domain" description="Nsp15 N-terminal oligomerization" evidence="24">
    <location>
        <begin position="6428"/>
        <end position="6488"/>
    </location>
</feature>
<feature type="domain" description="AV-Nsp11N/CoV-Nsp15M" evidence="25">
    <location>
        <begin position="6489"/>
        <end position="6614"/>
    </location>
</feature>
<feature type="domain" description="NendoU" evidence="23">
    <location>
        <begin position="6631"/>
        <end position="6770"/>
    </location>
</feature>
<feature type="domain" description="Nidovirus-type SAM-dependent 2'-O-MTase" evidence="22">
    <location>
        <begin position="6775"/>
        <end position="7069"/>
    </location>
</feature>
<feature type="zinc finger region" description="C4-type" evidence="6">
    <location>
        <begin position="1727"/>
        <end position="1764"/>
    </location>
</feature>
<feature type="zinc finger region" evidence="1">
    <location>
        <begin position="4302"/>
        <end position="4318"/>
    </location>
</feature>
<feature type="zinc finger region" evidence="1">
    <location>
        <begin position="4345"/>
        <end position="4358"/>
    </location>
</feature>
<feature type="region of interest" description="C2H2" evidence="28">
    <location>
        <begin position="200"/>
        <end position="236"/>
    </location>
</feature>
<feature type="region of interest" description="C4" evidence="28">
    <location>
        <begin position="323"/>
        <end position="344"/>
    </location>
</feature>
<feature type="region of interest" description="C2HC" evidence="28">
    <location>
        <begin position="370"/>
        <end position="416"/>
    </location>
</feature>
<feature type="region of interest" description="HD1" evidence="1">
    <location>
        <begin position="2201"/>
        <end position="2369"/>
    </location>
</feature>
<feature type="region of interest" description="Y1" evidence="31">
    <location>
        <begin position="2370"/>
        <end position="2460"/>
    </location>
</feature>
<feature type="region of interest" description="ZF1" evidence="31">
    <location>
        <begin position="2374"/>
        <end position="2387"/>
    </location>
</feature>
<feature type="region of interest" description="ZF2" evidence="31">
    <location>
        <begin position="2420"/>
        <end position="2430"/>
    </location>
</feature>
<feature type="region of interest" description="CoV-Y" evidence="31">
    <location>
        <begin position="2461"/>
        <end position="2738"/>
    </location>
</feature>
<feature type="region of interest" description="Y2" evidence="31">
    <location>
        <begin position="2461"/>
        <end position="2555"/>
    </location>
</feature>
<feature type="region of interest" description="Y3" evidence="31">
    <location>
        <begin position="2556"/>
        <end position="2637"/>
    </location>
</feature>
<feature type="region of interest" description="Y4" evidence="31">
    <location>
        <begin position="2638"/>
        <end position="2738"/>
    </location>
</feature>
<feature type="region of interest" description="HD2" evidence="1">
    <location>
        <begin position="2753"/>
        <end position="3160"/>
    </location>
</feature>
<feature type="region of interest" description="HD3" evidence="1">
    <location>
        <begin position="3562"/>
        <end position="3774"/>
    </location>
</feature>
<feature type="region of interest" description="RdRp Fingers N-ter" evidence="15">
    <location>
        <begin position="4734"/>
        <end position="4948"/>
    </location>
</feature>
<feature type="region of interest" description="RdRp Palm N-ter" evidence="15">
    <location>
        <begin position="4949"/>
        <end position="4987"/>
    </location>
</feature>
<feature type="region of interest" description="RdRp Fingers C-ter" evidence="15">
    <location>
        <begin position="4988"/>
        <end position="5046"/>
    </location>
</feature>
<feature type="region of interest" description="RdRp Palm C-ter" evidence="15">
    <location>
        <begin position="5047"/>
        <end position="5182"/>
    </location>
</feature>
<feature type="region of interest" description="RdRp Thumb" evidence="15">
    <location>
        <begin position="5183"/>
        <end position="5299"/>
    </location>
</feature>
<feature type="region of interest" description="GpppA-binding" evidence="21">
    <location>
        <begin position="6314"/>
        <end position="6328"/>
    </location>
</feature>
<feature type="active site" description="For PL-PRO activity" evidence="6">
    <location>
        <position position="1649"/>
    </location>
</feature>
<feature type="active site" description="For PL-PRO activity" evidence="6">
    <location>
        <position position="1810"/>
    </location>
</feature>
<feature type="active site" description="For PL-PRO activity" evidence="6">
    <location>
        <position position="1824"/>
    </location>
</feature>
<feature type="active site" description="For 3CL-PRO activity" evidence="9">
    <location>
        <position position="3279"/>
    </location>
</feature>
<feature type="active site" description="For 3CL-PRO activity" evidence="9">
    <location>
        <position position="3383"/>
    </location>
</feature>
<feature type="active site" evidence="15">
    <location>
        <position position="5126"/>
    </location>
</feature>
<feature type="active site" evidence="15">
    <location>
        <position position="5127"/>
    </location>
</feature>
<feature type="active site" evidence="15">
    <location>
        <position position="5128"/>
    </location>
</feature>
<feature type="active site" evidence="20">
    <location>
        <position position="5990"/>
    </location>
</feature>
<feature type="active site" evidence="20">
    <location>
        <position position="5992"/>
    </location>
</feature>
<feature type="active site" evidence="20">
    <location>
        <position position="6091"/>
    </location>
</feature>
<feature type="active site" evidence="20">
    <location>
        <position position="6168"/>
    </location>
</feature>
<feature type="active site" evidence="20">
    <location>
        <position position="6173"/>
    </location>
</feature>
<feature type="active site" evidence="23">
    <location>
        <position position="6661"/>
    </location>
</feature>
<feature type="active site" evidence="23">
    <location>
        <position position="6676"/>
    </location>
</feature>
<feature type="active site" evidence="23">
    <location>
        <position position="6716"/>
    </location>
</feature>
<feature type="active site" evidence="22">
    <location>
        <position position="6819"/>
    </location>
</feature>
<feature type="active site" evidence="22">
    <location>
        <position position="6903"/>
    </location>
</feature>
<feature type="active site" evidence="22">
    <location>
        <position position="6943"/>
    </location>
</feature>
<feature type="active site" evidence="22">
    <location>
        <position position="6976"/>
    </location>
</feature>
<feature type="binding site" evidence="28">
    <location>
        <position position="200"/>
    </location>
    <ligand>
        <name>Zn(2+)</name>
        <dbReference type="ChEBI" id="CHEBI:29105"/>
        <label>1</label>
    </ligand>
</feature>
<feature type="binding site" evidence="28">
    <location>
        <position position="231"/>
    </location>
    <ligand>
        <name>Zn(2+)</name>
        <dbReference type="ChEBI" id="CHEBI:29105"/>
        <label>1</label>
    </ligand>
</feature>
<feature type="binding site" evidence="28">
    <location>
        <position position="234"/>
    </location>
    <ligand>
        <name>Zn(2+)</name>
        <dbReference type="ChEBI" id="CHEBI:29105"/>
        <label>1</label>
    </ligand>
</feature>
<feature type="binding site" evidence="28">
    <location>
        <position position="236"/>
    </location>
    <ligand>
        <name>Zn(2+)</name>
        <dbReference type="ChEBI" id="CHEBI:29105"/>
        <label>1</label>
    </ligand>
</feature>
<feature type="binding site" evidence="28">
    <location>
        <position position="323"/>
    </location>
    <ligand>
        <name>Zn(2+)</name>
        <dbReference type="ChEBI" id="CHEBI:29105"/>
        <label>2</label>
    </ligand>
</feature>
<feature type="binding site" evidence="28">
    <location>
        <position position="326"/>
    </location>
    <ligand>
        <name>Zn(2+)</name>
        <dbReference type="ChEBI" id="CHEBI:29105"/>
        <label>2</label>
    </ligand>
</feature>
<feature type="binding site" evidence="28">
    <location>
        <position position="341"/>
    </location>
    <ligand>
        <name>Zn(2+)</name>
        <dbReference type="ChEBI" id="CHEBI:29105"/>
        <label>2</label>
    </ligand>
</feature>
<feature type="binding site" evidence="28">
    <location>
        <position position="344"/>
    </location>
    <ligand>
        <name>Zn(2+)</name>
        <dbReference type="ChEBI" id="CHEBI:29105"/>
        <label>2</label>
    </ligand>
</feature>
<feature type="binding site" evidence="28">
    <location>
        <position position="370"/>
    </location>
    <ligand>
        <name>Zn(2+)</name>
        <dbReference type="ChEBI" id="CHEBI:29105"/>
        <label>3</label>
    </ligand>
</feature>
<feature type="binding site" evidence="28">
    <location>
        <position position="373"/>
    </location>
    <ligand>
        <name>Zn(2+)</name>
        <dbReference type="ChEBI" id="CHEBI:29105"/>
        <label>3</label>
    </ligand>
</feature>
<feature type="binding site" evidence="28">
    <location>
        <position position="382"/>
    </location>
    <ligand>
        <name>Zn(2+)</name>
        <dbReference type="ChEBI" id="CHEBI:29105"/>
        <label>3</label>
    </ligand>
</feature>
<feature type="binding site" evidence="28">
    <location>
        <position position="416"/>
    </location>
    <ligand>
        <name>Zn(2+)</name>
        <dbReference type="ChEBI" id="CHEBI:29105"/>
        <label>3</label>
    </ligand>
</feature>
<feature type="binding site" evidence="6">
    <location>
        <position position="1727"/>
    </location>
    <ligand>
        <name>Zn(2+)</name>
        <dbReference type="ChEBI" id="CHEBI:29105"/>
        <label>4</label>
    </ligand>
</feature>
<feature type="binding site" evidence="6">
    <location>
        <position position="1730"/>
    </location>
    <ligand>
        <name>Zn(2+)</name>
        <dbReference type="ChEBI" id="CHEBI:29105"/>
        <label>4</label>
    </ligand>
</feature>
<feature type="binding site" evidence="6">
    <location>
        <position position="1762"/>
    </location>
    <ligand>
        <name>Zn(2+)</name>
        <dbReference type="ChEBI" id="CHEBI:29105"/>
        <label>4</label>
    </ligand>
</feature>
<feature type="binding site" evidence="6">
    <location>
        <position position="1764"/>
    </location>
    <ligand>
        <name>Zn(2+)</name>
        <dbReference type="ChEBI" id="CHEBI:29105"/>
        <label>4</label>
    </ligand>
</feature>
<feature type="binding site" evidence="31">
    <location>
        <position position="2374"/>
    </location>
    <ligand>
        <name>Zn(2+)</name>
        <dbReference type="ChEBI" id="CHEBI:29105"/>
        <label>5</label>
    </ligand>
</feature>
<feature type="binding site" evidence="31">
    <location>
        <position position="2379"/>
    </location>
    <ligand>
        <name>Zn(2+)</name>
        <dbReference type="ChEBI" id="CHEBI:29105"/>
        <label>5</label>
    </ligand>
</feature>
<feature type="binding site" evidence="31">
    <location>
        <position position="2384"/>
    </location>
    <ligand>
        <name>Zn(2+)</name>
        <dbReference type="ChEBI" id="CHEBI:29105"/>
        <label>5</label>
    </ligand>
</feature>
<feature type="binding site" evidence="31">
    <location>
        <position position="2387"/>
    </location>
    <ligand>
        <name>Zn(2+)</name>
        <dbReference type="ChEBI" id="CHEBI:29105"/>
        <label>5</label>
    </ligand>
</feature>
<feature type="binding site" evidence="31">
    <location>
        <position position="2420"/>
    </location>
    <ligand>
        <name>Zn(2+)</name>
        <dbReference type="ChEBI" id="CHEBI:29105"/>
        <label>6</label>
    </ligand>
</feature>
<feature type="binding site" evidence="31">
    <location>
        <position position="2423"/>
    </location>
    <ligand>
        <name>Zn(2+)</name>
        <dbReference type="ChEBI" id="CHEBI:29105"/>
        <label>6</label>
    </ligand>
</feature>
<feature type="binding site" evidence="31">
    <location>
        <position position="2427"/>
    </location>
    <ligand>
        <name>Zn(2+)</name>
        <dbReference type="ChEBI" id="CHEBI:29105"/>
        <label>6</label>
    </ligand>
</feature>
<feature type="binding site" evidence="31">
    <location>
        <position position="2430"/>
    </location>
    <ligand>
        <name>Zn(2+)</name>
        <dbReference type="ChEBI" id="CHEBI:29105"/>
        <label>6</label>
    </ligand>
</feature>
<feature type="binding site" evidence="19">
    <location>
        <position position="4302"/>
    </location>
    <ligand>
        <name>Zn(2+)</name>
        <dbReference type="ChEBI" id="CHEBI:29105"/>
        <label>7</label>
    </ligand>
</feature>
<feature type="binding site" evidence="19">
    <location>
        <position position="4305"/>
    </location>
    <ligand>
        <name>Zn(2+)</name>
        <dbReference type="ChEBI" id="CHEBI:29105"/>
        <label>7</label>
    </ligand>
</feature>
<feature type="binding site" evidence="19">
    <location>
        <position position="4311"/>
    </location>
    <ligand>
        <name>Zn(2+)</name>
        <dbReference type="ChEBI" id="CHEBI:29105"/>
        <label>7</label>
    </ligand>
</feature>
<feature type="binding site" evidence="19">
    <location>
        <position position="4318"/>
    </location>
    <ligand>
        <name>Zn(2+)</name>
        <dbReference type="ChEBI" id="CHEBI:29105"/>
        <label>7</label>
    </ligand>
</feature>
<feature type="binding site" evidence="19">
    <location>
        <position position="4345"/>
    </location>
    <ligand>
        <name>Zn(2+)</name>
        <dbReference type="ChEBI" id="CHEBI:29105"/>
        <label>8</label>
    </ligand>
</feature>
<feature type="binding site" evidence="19">
    <location>
        <position position="4348"/>
    </location>
    <ligand>
        <name>Zn(2+)</name>
        <dbReference type="ChEBI" id="CHEBI:29105"/>
        <label>8</label>
    </ligand>
</feature>
<feature type="binding site" evidence="19">
    <location>
        <position position="4356"/>
    </location>
    <ligand>
        <name>Zn(2+)</name>
        <dbReference type="ChEBI" id="CHEBI:29105"/>
        <label>8</label>
    </ligand>
</feature>
<feature type="binding site" evidence="19">
    <location>
        <position position="4358"/>
    </location>
    <ligand>
        <name>Zn(2+)</name>
        <dbReference type="ChEBI" id="CHEBI:29105"/>
        <label>8</label>
    </ligand>
</feature>
<feature type="binding site" evidence="3">
    <location>
        <position position="4576"/>
    </location>
    <ligand>
        <name>Mn(2+)</name>
        <dbReference type="ChEBI" id="CHEBI:29035"/>
    </ligand>
</feature>
<feature type="binding site" evidence="3">
    <location>
        <position position="4585"/>
    </location>
    <ligand>
        <name>Mn(2+)</name>
        <dbReference type="ChEBI" id="CHEBI:29035"/>
    </ligand>
</feature>
<feature type="binding site" evidence="34">
    <location>
        <position position="4662"/>
    </location>
    <ligand>
        <name>Zn(2+)</name>
        <dbReference type="ChEBI" id="CHEBI:29105"/>
        <label>9</label>
    </ligand>
</feature>
<feature type="binding site" evidence="34">
    <location>
        <position position="4668"/>
    </location>
    <ligand>
        <name>Zn(2+)</name>
        <dbReference type="ChEBI" id="CHEBI:29105"/>
        <label>9</label>
    </ligand>
</feature>
<feature type="binding site" evidence="34">
    <location>
        <position position="4673"/>
    </location>
    <ligand>
        <name>Zn(2+)</name>
        <dbReference type="ChEBI" id="CHEBI:29105"/>
        <label>9</label>
    </ligand>
</feature>
<feature type="binding site" evidence="34">
    <location>
        <position position="4677"/>
    </location>
    <ligand>
        <name>Zn(2+)</name>
        <dbReference type="ChEBI" id="CHEBI:29105"/>
        <label>9</label>
    </ligand>
</feature>
<feature type="binding site" evidence="15">
    <location>
        <position position="4854"/>
    </location>
    <ligand>
        <name>Zn(2+)</name>
        <dbReference type="ChEBI" id="CHEBI:29105"/>
        <label>10</label>
    </ligand>
</feature>
<feature type="binding site" evidence="15">
    <location>
        <position position="5009"/>
    </location>
    <ligand>
        <name>Zn(2+)</name>
        <dbReference type="ChEBI" id="CHEBI:29105"/>
        <label>10</label>
    </ligand>
</feature>
<feature type="binding site" evidence="15">
    <location>
        <position position="5012"/>
    </location>
    <ligand>
        <name>Zn(2+)</name>
        <dbReference type="ChEBI" id="CHEBI:29105"/>
        <label>10</label>
    </ligand>
</feature>
<feature type="binding site" evidence="15">
    <location>
        <position position="5013"/>
    </location>
    <ligand>
        <name>Zn(2+)</name>
        <dbReference type="ChEBI" id="CHEBI:29105"/>
        <label>10</label>
    </ligand>
</feature>
<feature type="binding site" evidence="10">
    <location>
        <position position="5304"/>
    </location>
    <ligand>
        <name>Zn(2+)</name>
        <dbReference type="ChEBI" id="CHEBI:29105"/>
        <label>11</label>
    </ligand>
</feature>
<feature type="binding site" evidence="10">
    <location>
        <position position="5307"/>
    </location>
    <ligand>
        <name>Zn(2+)</name>
        <dbReference type="ChEBI" id="CHEBI:29105"/>
        <label>11</label>
    </ligand>
</feature>
<feature type="binding site" evidence="10">
    <location>
        <position position="5315"/>
    </location>
    <ligand>
        <name>Zn(2+)</name>
        <dbReference type="ChEBI" id="CHEBI:29105"/>
        <label>12</label>
    </ligand>
</feature>
<feature type="binding site" evidence="10">
    <location>
        <position position="5318"/>
    </location>
    <ligand>
        <name>Zn(2+)</name>
        <dbReference type="ChEBI" id="CHEBI:29105"/>
        <label>12</label>
    </ligand>
</feature>
<feature type="binding site" evidence="10">
    <location>
        <position position="5325"/>
    </location>
    <ligand>
        <name>Zn(2+)</name>
        <dbReference type="ChEBI" id="CHEBI:29105"/>
        <label>11</label>
    </ligand>
</feature>
<feature type="binding site" evidence="10">
    <location>
        <position position="5328"/>
    </location>
    <ligand>
        <name>Zn(2+)</name>
        <dbReference type="ChEBI" id="CHEBI:29105"/>
        <label>11</label>
    </ligand>
</feature>
<feature type="binding site" evidence="10">
    <location>
        <position position="5332"/>
    </location>
    <ligand>
        <name>Zn(2+)</name>
        <dbReference type="ChEBI" id="CHEBI:29105"/>
        <label>12</label>
    </ligand>
</feature>
<feature type="binding site" evidence="10">
    <location>
        <position position="5338"/>
    </location>
    <ligand>
        <name>Zn(2+)</name>
        <dbReference type="ChEBI" id="CHEBI:29105"/>
        <label>12</label>
    </ligand>
</feature>
<feature type="binding site" evidence="10">
    <location>
        <position position="5349"/>
    </location>
    <ligand>
        <name>Zn(2+)</name>
        <dbReference type="ChEBI" id="CHEBI:29105"/>
        <label>13</label>
    </ligand>
</feature>
<feature type="binding site" evidence="10">
    <location>
        <position position="5354"/>
    </location>
    <ligand>
        <name>Zn(2+)</name>
        <dbReference type="ChEBI" id="CHEBI:29105"/>
        <label>13</label>
    </ligand>
</feature>
<feature type="binding site" evidence="10">
    <location>
        <position position="5371"/>
    </location>
    <ligand>
        <name>Zn(2+)</name>
        <dbReference type="ChEBI" id="CHEBI:29105"/>
        <label>13</label>
    </ligand>
</feature>
<feature type="binding site" evidence="10">
    <location>
        <position position="5374"/>
    </location>
    <ligand>
        <name>Zn(2+)</name>
        <dbReference type="ChEBI" id="CHEBI:29105"/>
        <label>13</label>
    </ligand>
</feature>
<feature type="binding site" evidence="1">
    <location>
        <begin position="5581"/>
        <end position="5588"/>
    </location>
    <ligand>
        <name>ATP</name>
        <dbReference type="ChEBI" id="CHEBI:30616"/>
    </ligand>
</feature>
<feature type="binding site" evidence="20">
    <location>
        <position position="6107"/>
    </location>
    <ligand>
        <name>Zn(2+)</name>
        <dbReference type="ChEBI" id="CHEBI:29105"/>
        <label>14</label>
    </ligand>
</feature>
<feature type="binding site" evidence="20">
    <location>
        <position position="6110"/>
    </location>
    <ligand>
        <name>Zn(2+)</name>
        <dbReference type="ChEBI" id="CHEBI:29105"/>
        <label>14</label>
    </ligand>
</feature>
<feature type="binding site" evidence="20">
    <location>
        <position position="6126"/>
    </location>
    <ligand>
        <name>Zn(2+)</name>
        <dbReference type="ChEBI" id="CHEBI:29105"/>
        <label>14</label>
    </ligand>
</feature>
<feature type="binding site" evidence="20">
    <location>
        <position position="6129"/>
    </location>
    <ligand>
        <name>Zn(2+)</name>
        <dbReference type="ChEBI" id="CHEBI:29105"/>
        <label>14</label>
    </ligand>
</feature>
<feature type="binding site" evidence="20">
    <location>
        <position position="6157"/>
    </location>
    <ligand>
        <name>Zn(2+)</name>
        <dbReference type="ChEBI" id="CHEBI:29105"/>
        <label>15</label>
    </ligand>
</feature>
<feature type="binding site" evidence="20">
    <location>
        <position position="6161"/>
    </location>
    <ligand>
        <name>Zn(2+)</name>
        <dbReference type="ChEBI" id="CHEBI:29105"/>
        <label>15</label>
    </ligand>
</feature>
<feature type="binding site" evidence="20">
    <location>
        <position position="6164"/>
    </location>
    <ligand>
        <name>Zn(2+)</name>
        <dbReference type="ChEBI" id="CHEBI:29105"/>
        <label>15</label>
    </ligand>
</feature>
<feature type="binding site" evidence="20">
    <location>
        <position position="6179"/>
    </location>
    <ligand>
        <name>Zn(2+)</name>
        <dbReference type="ChEBI" id="CHEBI:29105"/>
        <label>15</label>
    </ligand>
</feature>
<feature type="binding site" evidence="21">
    <location>
        <begin position="6231"/>
        <end position="6237"/>
    </location>
    <ligand>
        <name>S-adenosyl-L-methionine</name>
        <dbReference type="ChEBI" id="CHEBI:59789"/>
    </ligand>
</feature>
<feature type="binding site" evidence="21">
    <location>
        <position position="6352"/>
    </location>
    <ligand>
        <name>Zn(2+)</name>
        <dbReference type="ChEBI" id="CHEBI:29105"/>
        <label>16</label>
    </ligand>
</feature>
<feature type="binding site" evidence="21">
    <location>
        <position position="6373"/>
    </location>
    <ligand>
        <name>Zn(2+)</name>
        <dbReference type="ChEBI" id="CHEBI:29105"/>
        <label>16</label>
    </ligand>
</feature>
<feature type="binding site" evidence="21">
    <location>
        <position position="6384"/>
    </location>
    <ligand>
        <name>Zn(2+)</name>
        <dbReference type="ChEBI" id="CHEBI:29105"/>
        <label>16</label>
    </ligand>
</feature>
<feature type="binding site" evidence="21">
    <location>
        <position position="6387"/>
    </location>
    <ligand>
        <name>Zn(2+)</name>
        <dbReference type="ChEBI" id="CHEBI:29105"/>
        <label>16</label>
    </ligand>
</feature>
<feature type="site" description="Cleavage" evidence="1">
    <location>
        <begin position="179"/>
        <end position="180"/>
    </location>
</feature>
<feature type="site" description="Cleavage; by PL-PRO" evidence="1">
    <location>
        <begin position="818"/>
        <end position="819"/>
    </location>
</feature>
<feature type="site" description="Cleavage; by PL-PRO" evidence="1">
    <location>
        <begin position="3238"/>
        <end position="3239"/>
    </location>
</feature>
<feature type="site" description="Cleavage; by 3CL-PRO" evidence="1">
    <location>
        <begin position="3544"/>
        <end position="3545"/>
    </location>
</feature>
<feature type="site" description="Cleavage; by 3CL-PRO" evidence="1">
    <location>
        <begin position="3834"/>
        <end position="3835"/>
    </location>
</feature>
<feature type="site" description="Cleavage; by 3CL-PRO" evidence="1">
    <location>
        <begin position="3917"/>
        <end position="3918"/>
    </location>
</feature>
<feature type="site" description="Cleavage; by 3CL-PRO" evidence="1">
    <location>
        <begin position="4115"/>
        <end position="4116"/>
    </location>
</feature>
<feature type="site" description="Cleavage; by 3CL-PRO" evidence="1">
    <location>
        <begin position="4228"/>
        <end position="4229"/>
    </location>
</feature>
<feature type="site" description="Cleavage; by 3CL-PRO" evidence="1">
    <location>
        <begin position="4367"/>
        <end position="4368"/>
    </location>
</feature>
<feature type="site" description="Cleavage; by 3CL-PRO" evidence="1">
    <location>
        <begin position="5299"/>
        <end position="5300"/>
    </location>
</feature>
<feature type="site" description="Cleavage; by 3CL-PRO" evidence="1">
    <location>
        <begin position="5900"/>
        <end position="5901"/>
    </location>
</feature>
<feature type="site" description="Cleavage; by 3CL-PRO" evidence="1">
    <location>
        <begin position="6427"/>
        <end position="6428"/>
    </location>
</feature>
<feature type="site" description="Cleavage; by 3CL-PRO" evidence="1">
    <location>
        <begin position="6773"/>
        <end position="6774"/>
    </location>
</feature>
<feature type="disulfide bond" evidence="32">
    <location>
        <begin position="2238"/>
        <end position="2266"/>
    </location>
</feature>
<feature type="disulfide bond" evidence="32">
    <location>
        <begin position="2257"/>
        <end position="2263"/>
    </location>
</feature>
<accession>P0C6W6</accession>
<accession>Q3I5J6</accession>
<accession>Q3I5J7</accession>
<organismHost>
    <name type="scientific">Rhinolophus ferrumequinum</name>
    <name type="common">Greater horseshoe bat</name>
    <dbReference type="NCBI Taxonomy" id="59479"/>
</organismHost>
<organismHost>
    <name type="scientific">Rhinolophus macrotis</name>
    <name type="common">Big-eared horseshoe bat</name>
    <dbReference type="NCBI Taxonomy" id="196889"/>
</organismHost>
<organismHost>
    <name type="scientific">Rhinolophus pearsonii</name>
    <dbReference type="NCBI Taxonomy" id="188571"/>
</organismHost>
<organismHost>
    <name type="scientific">Rhinolophus sinicus</name>
    <name type="common">Chinese rufous horseshoe bat</name>
    <dbReference type="NCBI Taxonomy" id="89399"/>
</organismHost>
<organism>
    <name type="scientific">Bat coronavirus Rp3/2004</name>
    <name type="common">BtCoV/Rp3/2004</name>
    <name type="synonym">SARS-like coronavirus Rp3</name>
    <dbReference type="NCBI Taxonomy" id="349344"/>
    <lineage>
        <taxon>Viruses</taxon>
        <taxon>Riboviria</taxon>
        <taxon>Orthornavirae</taxon>
        <taxon>Pisuviricota</taxon>
        <taxon>Pisoniviricetes</taxon>
        <taxon>Nidovirales</taxon>
        <taxon>Cornidovirineae</taxon>
        <taxon>Coronaviridae</taxon>
        <taxon>Orthocoronavirinae</taxon>
        <taxon>Betacoronavirus</taxon>
        <taxon>Sarbecovirus</taxon>
        <taxon>Severe acute respiratory syndrome coronavirus</taxon>
    </lineage>
</organism>
<protein>
    <recommendedName>
        <fullName>Replicase polyprotein 1ab</fullName>
        <shortName>pp1ab</shortName>
    </recommendedName>
    <alternativeName>
        <fullName>ORF1ab polyprotein</fullName>
    </alternativeName>
    <component>
        <recommendedName>
            <fullName>Host translation inhibitor nsp1</fullName>
            <shortName>nsp1</shortName>
        </recommendedName>
        <alternativeName>
            <fullName>Leader protein</fullName>
        </alternativeName>
    </component>
    <component>
        <recommendedName>
            <fullName>Non-structural protein 2</fullName>
            <shortName>nsp2</shortName>
        </recommendedName>
        <alternativeName>
            <fullName>p65 homolog</fullName>
        </alternativeName>
    </component>
    <component>
        <recommendedName>
            <fullName>Papain-like proteinase nsp3</fullName>
            <shortName>PL-PRO</shortName>
            <ecNumber>3.4.19.12</ecNumber>
            <ecNumber>3.4.22.-</ecNumber>
        </recommendedName>
        <alternativeName>
            <fullName>Non-structural protein 3</fullName>
            <shortName>nsp3</shortName>
        </alternativeName>
    </component>
    <component>
        <recommendedName>
            <fullName>Non-structural protein 4</fullName>
            <shortName>nsp4</shortName>
        </recommendedName>
    </component>
    <component>
        <recommendedName>
            <fullName>3C-like proteinase nsp5</fullName>
            <shortName>3CL-PRO</shortName>
            <shortName>3CLp</shortName>
            <ecNumber>3.4.22.-</ecNumber>
        </recommendedName>
        <alternativeName>
            <fullName>nsp5</fullName>
        </alternativeName>
    </component>
    <component>
        <recommendedName>
            <fullName>Non-structural protein 6</fullName>
            <shortName>nsp6</shortName>
        </recommendedName>
    </component>
    <component>
        <recommendedName>
            <fullName>Non-structural protein 7</fullName>
            <shortName>nsp7</shortName>
        </recommendedName>
    </component>
    <component>
        <recommendedName>
            <fullName>Non-structural protein 8</fullName>
            <shortName>nsp8</shortName>
        </recommendedName>
    </component>
    <component>
        <recommendedName>
            <fullName>Viral protein genome-linked nsp9</fullName>
        </recommendedName>
        <alternativeName>
            <fullName>Non-structural protein 9</fullName>
            <shortName>nsp9</shortName>
        </alternativeName>
        <alternativeName>
            <fullName>RNA-capping enzyme subunit nsp9</fullName>
        </alternativeName>
        <alternativeName>
            <fullName>p12</fullName>
        </alternativeName>
    </component>
    <component>
        <recommendedName>
            <fullName>Non-structural protein 10</fullName>
            <shortName>nsp10</shortName>
        </recommendedName>
        <alternativeName>
            <fullName>Growth factor-like peptide</fullName>
            <shortName>GFL</shortName>
        </alternativeName>
    </component>
    <component>
        <recommendedName>
            <fullName>RNA-directed RNA polymerase nsp12</fullName>
            <shortName>Pol</shortName>
            <shortName>RdRp</shortName>
            <ecNumber>2.7.7.48</ecNumber>
            <ecNumber>2.7.7.50</ecNumber>
        </recommendedName>
        <alternativeName>
            <fullName>nsp12</fullName>
        </alternativeName>
    </component>
    <component>
        <recommendedName>
            <fullName>Helicase nsp13</fullName>
            <shortName>Hel</shortName>
            <ecNumber>3.6.4.12</ecNumber>
            <ecNumber>3.6.4.13</ecNumber>
        </recommendedName>
        <alternativeName>
            <fullName>nsp13</fullName>
        </alternativeName>
    </component>
    <component>
        <recommendedName>
            <fullName>Guanine-N7 methyltransferase nsp14</fullName>
            <shortName>ExoN</shortName>
            <ecNumber>2.1.1.56</ecNumber>
            <ecNumber>3.1.13.-</ecNumber>
        </recommendedName>
        <alternativeName>
            <fullName>nsp14</fullName>
        </alternativeName>
    </component>
    <component>
        <recommendedName>
            <fullName>Uridylate-specific endoribonuclease nsp15</fullName>
            <ecNumber>4.6.1.-</ecNumber>
        </recommendedName>
        <alternativeName>
            <fullName>NendoU</fullName>
        </alternativeName>
        <alternativeName>
            <fullName>nsp15</fullName>
        </alternativeName>
    </component>
    <component>
        <recommendedName>
            <fullName>2'-O-methyltransferase nsp16</fullName>
            <ecNumber>2.1.1.57</ecNumber>
        </recommendedName>
        <alternativeName>
            <fullName>nsp16</fullName>
        </alternativeName>
    </component>
</protein>
<proteinExistence type="inferred from homology"/>
<dbReference type="EC" id="3.4.19.12"/>
<dbReference type="EC" id="3.4.22.-"/>
<dbReference type="EC" id="2.7.7.48"/>
<dbReference type="EC" id="2.7.7.50"/>
<dbReference type="EC" id="3.6.4.12"/>
<dbReference type="EC" id="3.6.4.13"/>
<dbReference type="EC" id="2.1.1.56"/>
<dbReference type="EC" id="3.1.13.-"/>
<dbReference type="EC" id="4.6.1.-"/>
<dbReference type="EC" id="2.1.1.57"/>
<dbReference type="EMBL" id="DQ071615">
    <property type="protein sequence ID" value="AAZ67050.1"/>
    <property type="status" value="ALT_SEQ"/>
    <property type="molecule type" value="Genomic_RNA"/>
</dbReference>
<dbReference type="EMBL" id="DQ071615">
    <property type="protein sequence ID" value="AAZ67051.1"/>
    <property type="status" value="ALT_SEQ"/>
    <property type="molecule type" value="Genomic_RNA"/>
</dbReference>
<dbReference type="BMRB" id="P0C6W6"/>
<dbReference type="SMR" id="P0C6W6"/>
<dbReference type="Proteomes" id="UP000006570">
    <property type="component" value="Genome"/>
</dbReference>
<dbReference type="GO" id="GO:0044172">
    <property type="term" value="C:host cell endoplasmic reticulum-Golgi intermediate compartment"/>
    <property type="evidence" value="ECO:0007669"/>
    <property type="project" value="UniProtKB-SubCell"/>
</dbReference>
<dbReference type="GO" id="GO:0033644">
    <property type="term" value="C:host cell membrane"/>
    <property type="evidence" value="ECO:0007669"/>
    <property type="project" value="UniProtKB-SubCell"/>
</dbReference>
<dbReference type="GO" id="GO:0044220">
    <property type="term" value="C:host cell perinuclear region of cytoplasm"/>
    <property type="evidence" value="ECO:0007669"/>
    <property type="project" value="UniProtKB-SubCell"/>
</dbReference>
<dbReference type="GO" id="GO:0016020">
    <property type="term" value="C:membrane"/>
    <property type="evidence" value="ECO:0007669"/>
    <property type="project" value="UniProtKB-KW"/>
</dbReference>
<dbReference type="GO" id="GO:0000175">
    <property type="term" value="F:3'-5'-RNA exonuclease activity"/>
    <property type="evidence" value="ECO:0007669"/>
    <property type="project" value="InterPro"/>
</dbReference>
<dbReference type="GO" id="GO:0043139">
    <property type="term" value="F:5'-3' DNA helicase activity"/>
    <property type="evidence" value="ECO:0007669"/>
    <property type="project" value="TreeGrafter"/>
</dbReference>
<dbReference type="GO" id="GO:0005524">
    <property type="term" value="F:ATP binding"/>
    <property type="evidence" value="ECO:0007669"/>
    <property type="project" value="UniProtKB-KW"/>
</dbReference>
<dbReference type="GO" id="GO:0016887">
    <property type="term" value="F:ATP hydrolysis activity"/>
    <property type="evidence" value="ECO:0007669"/>
    <property type="project" value="RHEA"/>
</dbReference>
<dbReference type="GO" id="GO:0004843">
    <property type="term" value="F:cysteine-type deubiquitinase activity"/>
    <property type="evidence" value="ECO:0007669"/>
    <property type="project" value="UniProtKB-EC"/>
</dbReference>
<dbReference type="GO" id="GO:0004197">
    <property type="term" value="F:cysteine-type endopeptidase activity"/>
    <property type="evidence" value="ECO:0007669"/>
    <property type="project" value="InterPro"/>
</dbReference>
<dbReference type="GO" id="GO:0004519">
    <property type="term" value="F:endonuclease activity"/>
    <property type="evidence" value="ECO:0007669"/>
    <property type="project" value="UniProtKB-KW"/>
</dbReference>
<dbReference type="GO" id="GO:0002151">
    <property type="term" value="F:G-quadruplex RNA binding"/>
    <property type="evidence" value="ECO:0007669"/>
    <property type="project" value="InterPro"/>
</dbReference>
<dbReference type="GO" id="GO:0016829">
    <property type="term" value="F:lyase activity"/>
    <property type="evidence" value="ECO:0007669"/>
    <property type="project" value="UniProtKB-KW"/>
</dbReference>
<dbReference type="GO" id="GO:0004483">
    <property type="term" value="F:mRNA (nucleoside-2'-O-)-methyltransferase activity"/>
    <property type="evidence" value="ECO:0007669"/>
    <property type="project" value="InterPro"/>
</dbReference>
<dbReference type="GO" id="GO:0004482">
    <property type="term" value="F:mRNA 5'-cap (guanine-N7-)-methyltransferase activity"/>
    <property type="evidence" value="ECO:0007669"/>
    <property type="project" value="InterPro"/>
</dbReference>
<dbReference type="GO" id="GO:0008242">
    <property type="term" value="F:omega peptidase activity"/>
    <property type="evidence" value="ECO:0007669"/>
    <property type="project" value="InterPro"/>
</dbReference>
<dbReference type="GO" id="GO:0003724">
    <property type="term" value="F:RNA helicase activity"/>
    <property type="evidence" value="ECO:0007669"/>
    <property type="project" value="UniProtKB-EC"/>
</dbReference>
<dbReference type="GO" id="GO:0003968">
    <property type="term" value="F:RNA-directed RNA polymerase activity"/>
    <property type="evidence" value="ECO:0007669"/>
    <property type="project" value="UniProtKB-KW"/>
</dbReference>
<dbReference type="GO" id="GO:0003727">
    <property type="term" value="F:single-stranded RNA binding"/>
    <property type="evidence" value="ECO:0007669"/>
    <property type="project" value="InterPro"/>
</dbReference>
<dbReference type="GO" id="GO:0008270">
    <property type="term" value="F:zinc ion binding"/>
    <property type="evidence" value="ECO:0007669"/>
    <property type="project" value="UniProtKB-KW"/>
</dbReference>
<dbReference type="GO" id="GO:0006351">
    <property type="term" value="P:DNA-templated transcription"/>
    <property type="evidence" value="ECO:0007669"/>
    <property type="project" value="InterPro"/>
</dbReference>
<dbReference type="GO" id="GO:0006508">
    <property type="term" value="P:proteolysis"/>
    <property type="evidence" value="ECO:0007669"/>
    <property type="project" value="UniProtKB-KW"/>
</dbReference>
<dbReference type="GO" id="GO:0010506">
    <property type="term" value="P:regulation of autophagy"/>
    <property type="evidence" value="ECO:0007669"/>
    <property type="project" value="InterPro"/>
</dbReference>
<dbReference type="GO" id="GO:0039520">
    <property type="term" value="P:symbiont-mediated activation of host autophagy"/>
    <property type="evidence" value="ECO:0007669"/>
    <property type="project" value="UniProtKB-KW"/>
</dbReference>
<dbReference type="GO" id="GO:0039595">
    <property type="term" value="P:symbiont-mediated degradation of host mRNA"/>
    <property type="evidence" value="ECO:0007669"/>
    <property type="project" value="UniProtKB-KW"/>
</dbReference>
<dbReference type="GO" id="GO:0039648">
    <property type="term" value="P:symbiont-mediated perturbation of host ubiquitin-like protein modification"/>
    <property type="evidence" value="ECO:0007669"/>
    <property type="project" value="UniProtKB-KW"/>
</dbReference>
<dbReference type="GO" id="GO:0039657">
    <property type="term" value="P:symbiont-mediated suppression of host gene expression"/>
    <property type="evidence" value="ECO:0007669"/>
    <property type="project" value="UniProtKB-KW"/>
</dbReference>
<dbReference type="GO" id="GO:0039579">
    <property type="term" value="P:symbiont-mediated suppression of host ISG15-protein conjugation"/>
    <property type="evidence" value="ECO:0007669"/>
    <property type="project" value="UniProtKB-KW"/>
</dbReference>
<dbReference type="GO" id="GO:0085034">
    <property type="term" value="P:symbiont-mediated suppression of host NF-kappaB cascade"/>
    <property type="evidence" value="ECO:0007669"/>
    <property type="project" value="UniProtKB-KW"/>
</dbReference>
<dbReference type="GO" id="GO:0039502">
    <property type="term" value="P:symbiont-mediated suppression of host type I interferon-mediated signaling pathway"/>
    <property type="evidence" value="ECO:0007669"/>
    <property type="project" value="UniProtKB-KW"/>
</dbReference>
<dbReference type="GO" id="GO:0019082">
    <property type="term" value="P:viral protein processing"/>
    <property type="evidence" value="ECO:0007669"/>
    <property type="project" value="InterPro"/>
</dbReference>
<dbReference type="GO" id="GO:0039694">
    <property type="term" value="P:viral RNA genome replication"/>
    <property type="evidence" value="ECO:0007669"/>
    <property type="project" value="InterPro"/>
</dbReference>
<dbReference type="GO" id="GO:0075523">
    <property type="term" value="P:viral translational frameshifting"/>
    <property type="evidence" value="ECO:0007669"/>
    <property type="project" value="UniProtKB-KW"/>
</dbReference>
<dbReference type="CDD" id="cd21409">
    <property type="entry name" value="1B_cv_Nsp13-like"/>
    <property type="match status" value="1"/>
</dbReference>
<dbReference type="CDD" id="cd21560">
    <property type="entry name" value="betaCoV-Nsp6"/>
    <property type="match status" value="1"/>
</dbReference>
<dbReference type="CDD" id="cd21722">
    <property type="entry name" value="betaCoV_Nsp13-helicase"/>
    <property type="match status" value="1"/>
</dbReference>
<dbReference type="CDD" id="cd21659">
    <property type="entry name" value="betaCoV_Nsp14"/>
    <property type="match status" value="1"/>
</dbReference>
<dbReference type="CDD" id="cd21516">
    <property type="entry name" value="betaCoV_Nsp2_SARS-like"/>
    <property type="match status" value="1"/>
</dbReference>
<dbReference type="CDD" id="cd21666">
    <property type="entry name" value="betaCoV_Nsp5_Mpro"/>
    <property type="match status" value="1"/>
</dbReference>
<dbReference type="CDD" id="cd21827">
    <property type="entry name" value="betaCoV_Nsp7"/>
    <property type="match status" value="1"/>
</dbReference>
<dbReference type="CDD" id="cd21831">
    <property type="entry name" value="betaCoV_Nsp8"/>
    <property type="match status" value="1"/>
</dbReference>
<dbReference type="CDD" id="cd21898">
    <property type="entry name" value="betaCoV_Nsp9"/>
    <property type="match status" value="1"/>
</dbReference>
<dbReference type="CDD" id="cd21732">
    <property type="entry name" value="betaCoV_PLPro"/>
    <property type="match status" value="1"/>
</dbReference>
<dbReference type="CDD" id="cd23528">
    <property type="entry name" value="capping_2-OMTase_betaCoV_Nsp16"/>
    <property type="match status" value="1"/>
</dbReference>
<dbReference type="CDD" id="cd21872">
    <property type="entry name" value="CoV_Nsp10"/>
    <property type="match status" value="1"/>
</dbReference>
<dbReference type="CDD" id="cd21473">
    <property type="entry name" value="cv_Nsp4_TM"/>
    <property type="match status" value="1"/>
</dbReference>
<dbReference type="CDD" id="cd21167">
    <property type="entry name" value="M_alpha_beta_cv_Nsp15-like"/>
    <property type="match status" value="1"/>
</dbReference>
<dbReference type="CDD" id="cd21563">
    <property type="entry name" value="Macro_cv_SUD-M_Nsp3-like"/>
    <property type="match status" value="1"/>
</dbReference>
<dbReference type="CDD" id="cd21562">
    <property type="entry name" value="Macro_cv_SUD-N_Nsp3-like"/>
    <property type="match status" value="1"/>
</dbReference>
<dbReference type="CDD" id="cd21557">
    <property type="entry name" value="Macro_X_Nsp3-like"/>
    <property type="match status" value="1"/>
</dbReference>
<dbReference type="CDD" id="cd21161">
    <property type="entry name" value="NendoU_cv_Nsp15-like"/>
    <property type="match status" value="1"/>
</dbReference>
<dbReference type="CDD" id="cd21171">
    <property type="entry name" value="NTD_alpha_betaCoV_Nsp15-like"/>
    <property type="match status" value="1"/>
</dbReference>
<dbReference type="CDD" id="cd22662">
    <property type="entry name" value="SARS-CoV-like_Nsp1_C"/>
    <property type="match status" value="1"/>
</dbReference>
<dbReference type="CDD" id="cd21796">
    <property type="entry name" value="SARS-CoV-like_Nsp1_N"/>
    <property type="match status" value="1"/>
</dbReference>
<dbReference type="CDD" id="cd21814">
    <property type="entry name" value="SARS-CoV-like_Nsp3_betaSM"/>
    <property type="match status" value="1"/>
</dbReference>
<dbReference type="CDD" id="cd21822">
    <property type="entry name" value="SARS-CoV-like_Nsp3_NAB"/>
    <property type="match status" value="1"/>
</dbReference>
<dbReference type="CDD" id="cd21591">
    <property type="entry name" value="SARS-CoV-like_RdRp"/>
    <property type="match status" value="1"/>
</dbReference>
<dbReference type="CDD" id="cd21689">
    <property type="entry name" value="stalk_CoV_Nsp13-like"/>
    <property type="match status" value="1"/>
</dbReference>
<dbReference type="CDD" id="cd21525">
    <property type="entry name" value="SUD_C_SARS-CoV_Nsp3"/>
    <property type="match status" value="1"/>
</dbReference>
<dbReference type="CDD" id="cd21717">
    <property type="entry name" value="TM_Y_SARS-CoV-like_Nsp3_C"/>
    <property type="match status" value="1"/>
</dbReference>
<dbReference type="CDD" id="cd21467">
    <property type="entry name" value="Ubl1_cv_Nsp3_N-like"/>
    <property type="match status" value="1"/>
</dbReference>
<dbReference type="CDD" id="cd21401">
    <property type="entry name" value="ZBD_cv_Nsp13-like"/>
    <property type="match status" value="1"/>
</dbReference>
<dbReference type="FunFam" id="1.10.8.370:FF:000001">
    <property type="entry name" value="Orf1a polyprotein"/>
    <property type="match status" value="1"/>
</dbReference>
<dbReference type="FunFam" id="2.40.10.250:FF:000001">
    <property type="entry name" value="Orf1a polyprotein"/>
    <property type="match status" value="1"/>
</dbReference>
<dbReference type="FunFam" id="3.40.220.30:FF:000001">
    <property type="entry name" value="Orf1a polyprotein"/>
    <property type="match status" value="1"/>
</dbReference>
<dbReference type="FunFam" id="3.30.160.820:FF:000001">
    <property type="entry name" value="Orf1ab polyprotein"/>
    <property type="match status" value="1"/>
</dbReference>
<dbReference type="FunFam" id="3.40.50.150:FF:000162">
    <property type="entry name" value="Orf1ab polyprotein"/>
    <property type="match status" value="1"/>
</dbReference>
<dbReference type="FunFam" id="3.40.50.300:FF:001105">
    <property type="entry name" value="Orf1ab polyprotein"/>
    <property type="match status" value="1"/>
</dbReference>
<dbReference type="FunFam" id="3.40.50.300:FF:001139">
    <property type="entry name" value="Orf1ab polyprotein"/>
    <property type="match status" value="1"/>
</dbReference>
<dbReference type="FunFam" id="1.10.150.420:FF:000001">
    <property type="entry name" value="Replicase polyprotein"/>
    <property type="match status" value="1"/>
</dbReference>
<dbReference type="FunFam" id="1.10.1840.10:FF:000001">
    <property type="entry name" value="Replicase polyprotein 1a"/>
    <property type="match status" value="1"/>
</dbReference>
<dbReference type="FunFam" id="1.10.8.1190:FF:000001">
    <property type="entry name" value="Replicase polyprotein 1a"/>
    <property type="match status" value="1"/>
</dbReference>
<dbReference type="FunFam" id="2.40.10.10:FF:000033">
    <property type="entry name" value="Replicase polyprotein 1a"/>
    <property type="match status" value="1"/>
</dbReference>
<dbReference type="FunFam" id="3.40.220.20:FF:000001">
    <property type="entry name" value="Replicase polyprotein 1a"/>
    <property type="match status" value="1"/>
</dbReference>
<dbReference type="Gene3D" id="1.10.8.1190">
    <property type="match status" value="1"/>
</dbReference>
<dbReference type="Gene3D" id="2.60.120.1680">
    <property type="match status" value="1"/>
</dbReference>
<dbReference type="Gene3D" id="3.10.20.350">
    <property type="match status" value="1"/>
</dbReference>
<dbReference type="Gene3D" id="3.10.20.540">
    <property type="match status" value="1"/>
</dbReference>
<dbReference type="Gene3D" id="3.40.50.11580">
    <property type="match status" value="1"/>
</dbReference>
<dbReference type="Gene3D" id="6.10.140.2090">
    <property type="match status" value="1"/>
</dbReference>
<dbReference type="Gene3D" id="1.10.150.420">
    <property type="entry name" value="Coronavirus nonstructural protein 4 C-terminus"/>
    <property type="match status" value="1"/>
</dbReference>
<dbReference type="Gene3D" id="3.40.30.150">
    <property type="entry name" value="Coronavirus polyprotein cleavage domain"/>
    <property type="match status" value="1"/>
</dbReference>
<dbReference type="Gene3D" id="3.40.220.10">
    <property type="entry name" value="Leucine Aminopeptidase, subunit E, domain 1"/>
    <property type="match status" value="1"/>
</dbReference>
<dbReference type="Gene3D" id="1.10.1840.10">
    <property type="entry name" value="main proteinase (3clpro) structure, domain 3"/>
    <property type="match status" value="1"/>
</dbReference>
<dbReference type="Gene3D" id="3.30.160.820">
    <property type="entry name" value="Nsp15 N-terminal domain-like"/>
    <property type="match status" value="1"/>
</dbReference>
<dbReference type="Gene3D" id="3.40.220.20">
    <property type="entry name" value="Nsp3, SUD-M subdomain"/>
    <property type="match status" value="1"/>
</dbReference>
<dbReference type="Gene3D" id="3.40.220.30">
    <property type="entry name" value="Nsp3, SUD-N subdomain"/>
    <property type="match status" value="1"/>
</dbReference>
<dbReference type="Gene3D" id="1.10.8.370">
    <property type="entry name" value="nsp7 replicase"/>
    <property type="match status" value="1"/>
</dbReference>
<dbReference type="Gene3D" id="3.30.70.3540">
    <property type="entry name" value="Nsp8 replicase, head domain"/>
    <property type="match status" value="1"/>
</dbReference>
<dbReference type="Gene3D" id="3.40.50.300">
    <property type="entry name" value="P-loop containing nucleotide triphosphate hydrolases"/>
    <property type="match status" value="2"/>
</dbReference>
<dbReference type="Gene3D" id="2.40.10.250">
    <property type="entry name" value="Replicase NSP9"/>
    <property type="match status" value="1"/>
</dbReference>
<dbReference type="Gene3D" id="3.40.50.11020">
    <property type="entry name" value="Replicase polyprotein, nucleic acid-binding domain"/>
    <property type="match status" value="1"/>
</dbReference>
<dbReference type="Gene3D" id="2.40.10.10">
    <property type="entry name" value="Trypsin-like serine proteases"/>
    <property type="match status" value="2"/>
</dbReference>
<dbReference type="Gene3D" id="3.40.50.150">
    <property type="entry name" value="Vaccinia Virus protein VP39"/>
    <property type="match status" value="1"/>
</dbReference>
<dbReference type="InterPro" id="IPR027351">
    <property type="entry name" value="(+)RNA_virus_helicase_core_dom"/>
</dbReference>
<dbReference type="InterPro" id="IPR046443">
    <property type="entry name" value="a/bCoV_NSP1_glob"/>
</dbReference>
<dbReference type="InterPro" id="IPR046440">
    <property type="entry name" value="AV_NSP11N_COV_NSP15M"/>
</dbReference>
<dbReference type="InterPro" id="IPR046442">
    <property type="entry name" value="bCoV_NSP1_C"/>
</dbReference>
<dbReference type="InterPro" id="IPR050534">
    <property type="entry name" value="Coronavir_polyprotein_1ab"/>
</dbReference>
<dbReference type="InterPro" id="IPR043608">
    <property type="entry name" value="CoV_NSP15_M"/>
</dbReference>
<dbReference type="InterPro" id="IPR043606">
    <property type="entry name" value="CoV_NSP15_N"/>
</dbReference>
<dbReference type="InterPro" id="IPR043613">
    <property type="entry name" value="CoV_NSP2_C"/>
</dbReference>
<dbReference type="InterPro" id="IPR047573">
    <property type="entry name" value="CoV_NSP2_M"/>
</dbReference>
<dbReference type="InterPro" id="IPR049894">
    <property type="entry name" value="COV_NSP3_3ECTO"/>
</dbReference>
<dbReference type="InterPro" id="IPR043611">
    <property type="entry name" value="CoV_NSP3_C"/>
</dbReference>
<dbReference type="InterPro" id="IPR047566">
    <property type="entry name" value="CoV_NSP3_Y"/>
</dbReference>
<dbReference type="InterPro" id="IPR032505">
    <property type="entry name" value="CoV_NSP4_C"/>
</dbReference>
<dbReference type="InterPro" id="IPR043612">
    <property type="entry name" value="CoV_NSP4_N"/>
</dbReference>
<dbReference type="InterPro" id="IPR043502">
    <property type="entry name" value="DNA/RNA_pol_sf"/>
</dbReference>
<dbReference type="InterPro" id="IPR041679">
    <property type="entry name" value="DNA2/NAM7-like_C"/>
</dbReference>
<dbReference type="InterPro" id="IPR022733">
    <property type="entry name" value="DPUP_SUD_C_bCoV"/>
</dbReference>
<dbReference type="InterPro" id="IPR037227">
    <property type="entry name" value="EndoU-like"/>
</dbReference>
<dbReference type="InterPro" id="IPR002589">
    <property type="entry name" value="Macro_dom"/>
</dbReference>
<dbReference type="InterPro" id="IPR043472">
    <property type="entry name" value="Macro_dom-like"/>
</dbReference>
<dbReference type="InterPro" id="IPR044371">
    <property type="entry name" value="Macro_X_NSP3-like"/>
</dbReference>
<dbReference type="InterPro" id="IPR046435">
    <property type="entry name" value="N7_MTase_CoV"/>
</dbReference>
<dbReference type="InterPro" id="IPR043609">
    <property type="entry name" value="NendoU_nidovirus"/>
</dbReference>
<dbReference type="InterPro" id="IPR044863">
    <property type="entry name" value="NIRAN"/>
</dbReference>
<dbReference type="InterPro" id="IPR046438">
    <property type="entry name" value="NIV_2_O_MTASE"/>
</dbReference>
<dbReference type="InterPro" id="IPR046436">
    <property type="entry name" value="NIV_EXON"/>
</dbReference>
<dbReference type="InterPro" id="IPR036333">
    <property type="entry name" value="NSP10_sf_CoV"/>
</dbReference>
<dbReference type="InterPro" id="IPR047570">
    <property type="entry name" value="NSP12_IF_CoV"/>
</dbReference>
<dbReference type="InterPro" id="IPR044343">
    <property type="entry name" value="NSP13_1B_dom_CoV"/>
</dbReference>
<dbReference type="InterPro" id="IPR048673">
    <property type="entry name" value="NSP13_stalk_CoV"/>
</dbReference>
<dbReference type="InterPro" id="IPR048672">
    <property type="entry name" value="NSP13_ZBD_CoV"/>
</dbReference>
<dbReference type="InterPro" id="IPR027352">
    <property type="entry name" value="NSP13_ZBD_CoV-like"/>
</dbReference>
<dbReference type="InterPro" id="IPR044315">
    <property type="entry name" value="NSP14_betaCoV"/>
</dbReference>
<dbReference type="InterPro" id="IPR009466">
    <property type="entry name" value="NSP14_CoV"/>
</dbReference>
<dbReference type="InterPro" id="IPR044330">
    <property type="entry name" value="NSP15_alpha_betaCoV_N"/>
</dbReference>
<dbReference type="InterPro" id="IPR044322">
    <property type="entry name" value="NSP15_M_alpha_beta_CoV"/>
</dbReference>
<dbReference type="InterPro" id="IPR043174">
    <property type="entry name" value="NSP15_middle_sf"/>
</dbReference>
<dbReference type="InterPro" id="IPR042515">
    <property type="entry name" value="NSP15_N_CoV"/>
</dbReference>
<dbReference type="InterPro" id="IPR044401">
    <property type="entry name" value="NSP15_NendoU_CoV"/>
</dbReference>
<dbReference type="InterPro" id="IPR009461">
    <property type="entry name" value="NSP16_CoV-like"/>
</dbReference>
<dbReference type="InterPro" id="IPR021590">
    <property type="entry name" value="NSP1_glob_bCoV"/>
</dbReference>
<dbReference type="InterPro" id="IPR038030">
    <property type="entry name" value="NSP1_glob_sf_bCoV"/>
</dbReference>
<dbReference type="InterPro" id="IPR043615">
    <property type="entry name" value="NSP2_N_CoV"/>
</dbReference>
<dbReference type="InterPro" id="IPR044389">
    <property type="entry name" value="NSP2_SARS-CoV-like"/>
</dbReference>
<dbReference type="InterPro" id="IPR024375">
    <property type="entry name" value="NSP3_bCoV"/>
</dbReference>
<dbReference type="InterPro" id="IPR047567">
    <property type="entry name" value="NSP3_G2M_bCoV"/>
</dbReference>
<dbReference type="InterPro" id="IPR024358">
    <property type="entry name" value="NSP3_N_bCoV"/>
</dbReference>
<dbReference type="InterPro" id="IPR032592">
    <property type="entry name" value="NSP3_NAB_bCoV"/>
</dbReference>
<dbReference type="InterPro" id="IPR042570">
    <property type="entry name" value="NSP3_NAB_bCoV_sf"/>
</dbReference>
<dbReference type="InterPro" id="IPR038166">
    <property type="entry name" value="NSP3_PL2pro_sf_bCoV"/>
</dbReference>
<dbReference type="InterPro" id="IPR038400">
    <property type="entry name" value="NSP3_SUD-M_sf_bCoV"/>
</dbReference>
<dbReference type="InterPro" id="IPR044864">
    <property type="entry name" value="NSP3_SUD-N_bCoV"/>
</dbReference>
<dbReference type="InterPro" id="IPR044374">
    <property type="entry name" value="NSP3_SUD-N_SARS-CoV"/>
</dbReference>
<dbReference type="InterPro" id="IPR043478">
    <property type="entry name" value="NSP3_SUD-N_sf_bCoV"/>
</dbReference>
<dbReference type="InterPro" id="IPR044357">
    <property type="entry name" value="NSP3_Ubl1_dom_CoV"/>
</dbReference>
<dbReference type="InterPro" id="IPR044353">
    <property type="entry name" value="Nsp3_Ubl2_dom_CoV"/>
</dbReference>
<dbReference type="InterPro" id="IPR038083">
    <property type="entry name" value="NSP3A-like"/>
</dbReference>
<dbReference type="InterPro" id="IPR038123">
    <property type="entry name" value="NSP4_C_sf_CoV"/>
</dbReference>
<dbReference type="InterPro" id="IPR044367">
    <property type="entry name" value="NSP6_betaCoV"/>
</dbReference>
<dbReference type="InterPro" id="IPR043610">
    <property type="entry name" value="NSP6_CoV"/>
</dbReference>
<dbReference type="InterPro" id="IPR014828">
    <property type="entry name" value="NSP7_CoV"/>
</dbReference>
<dbReference type="InterPro" id="IPR037204">
    <property type="entry name" value="NSP7_sf_CoV"/>
</dbReference>
<dbReference type="InterPro" id="IPR014829">
    <property type="entry name" value="NSP8_CoV"/>
</dbReference>
<dbReference type="InterPro" id="IPR037230">
    <property type="entry name" value="NSP8_sf_CoV"/>
</dbReference>
<dbReference type="InterPro" id="IPR014822">
    <property type="entry name" value="NSP9_CoV"/>
</dbReference>
<dbReference type="InterPro" id="IPR036499">
    <property type="entry name" value="NSP9_sf_CoV"/>
</dbReference>
<dbReference type="InterPro" id="IPR027417">
    <property type="entry name" value="P-loop_NTPase"/>
</dbReference>
<dbReference type="InterPro" id="IPR013016">
    <property type="entry name" value="Peptidase_C16_CoV"/>
</dbReference>
<dbReference type="InterPro" id="IPR008740">
    <property type="entry name" value="Peptidase_C30_CoV"/>
</dbReference>
<dbReference type="InterPro" id="IPR043477">
    <property type="entry name" value="Peptidase_C30_dom3_CoV"/>
</dbReference>
<dbReference type="InterPro" id="IPR009003">
    <property type="entry name" value="Peptidase_S1_PA"/>
</dbReference>
<dbReference type="InterPro" id="IPR043504">
    <property type="entry name" value="Peptidase_S1_PA_chymotrypsin"/>
</dbReference>
<dbReference type="InterPro" id="IPR043177">
    <property type="entry name" value="PLpro_N_sf_CoV"/>
</dbReference>
<dbReference type="InterPro" id="IPR043503">
    <property type="entry name" value="PLpro_palm_finger_dom_CoV"/>
</dbReference>
<dbReference type="InterPro" id="IPR043178">
    <property type="entry name" value="PLpro_thumb_sf_CoV"/>
</dbReference>
<dbReference type="InterPro" id="IPR046441">
    <property type="entry name" value="RdRp_CoV"/>
</dbReference>
<dbReference type="InterPro" id="IPR009469">
    <property type="entry name" value="RdRp_N_CoV"/>
</dbReference>
<dbReference type="InterPro" id="IPR044351">
    <property type="entry name" value="RdRp_SARS-CoV-like"/>
</dbReference>
<dbReference type="InterPro" id="IPR001205">
    <property type="entry name" value="RNA-dir_pol_C"/>
</dbReference>
<dbReference type="InterPro" id="IPR007094">
    <property type="entry name" value="RNA-dir_pol_PSvirus"/>
</dbReference>
<dbReference type="InterPro" id="IPR018995">
    <property type="entry name" value="RNA_synth_NSP10_CoV"/>
</dbReference>
<dbReference type="InterPro" id="IPR029063">
    <property type="entry name" value="SAM-dependent_MTases_sf"/>
</dbReference>
<dbReference type="PANTHER" id="PTHR43788">
    <property type="entry name" value="DNA2/NAM7 HELICASE FAMILY MEMBER"/>
    <property type="match status" value="1"/>
</dbReference>
<dbReference type="PANTHER" id="PTHR43788:SF16">
    <property type="entry name" value="HELICASE WITH ZINC FINGER 2"/>
    <property type="match status" value="1"/>
</dbReference>
<dbReference type="Pfam" id="PF13087">
    <property type="entry name" value="AAA_12"/>
    <property type="match status" value="1"/>
</dbReference>
<dbReference type="Pfam" id="PF16251">
    <property type="entry name" value="bCoV_NAB"/>
    <property type="match status" value="1"/>
</dbReference>
<dbReference type="Pfam" id="PF11501">
    <property type="entry name" value="bCoV_NSP1"/>
    <property type="match status" value="1"/>
</dbReference>
<dbReference type="Pfam" id="PF12379">
    <property type="entry name" value="bCoV_NSP3_N"/>
    <property type="match status" value="1"/>
</dbReference>
<dbReference type="Pfam" id="PF12124">
    <property type="entry name" value="bCoV_SUD_C"/>
    <property type="match status" value="1"/>
</dbReference>
<dbReference type="Pfam" id="PF11633">
    <property type="entry name" value="bCoV_SUD_M"/>
    <property type="match status" value="1"/>
</dbReference>
<dbReference type="Pfam" id="PF06471">
    <property type="entry name" value="CoV_ExoN"/>
    <property type="match status" value="1"/>
</dbReference>
<dbReference type="Pfam" id="PF06460">
    <property type="entry name" value="CoV_Methyltr_2"/>
    <property type="match status" value="1"/>
</dbReference>
<dbReference type="Pfam" id="PF09401">
    <property type="entry name" value="CoV_NSP10"/>
    <property type="match status" value="1"/>
</dbReference>
<dbReference type="Pfam" id="PF20631">
    <property type="entry name" value="CoV_NSP13_1B"/>
    <property type="match status" value="1"/>
</dbReference>
<dbReference type="Pfam" id="PF20633">
    <property type="entry name" value="CoV_NSP13_stalk"/>
    <property type="match status" value="1"/>
</dbReference>
<dbReference type="Pfam" id="PF20632">
    <property type="entry name" value="CoV_NSP13_ZBD"/>
    <property type="match status" value="1"/>
</dbReference>
<dbReference type="Pfam" id="PF19215">
    <property type="entry name" value="CoV_NSP15_C"/>
    <property type="match status" value="1"/>
</dbReference>
<dbReference type="Pfam" id="PF19216">
    <property type="entry name" value="CoV_NSP15_M"/>
    <property type="match status" value="1"/>
</dbReference>
<dbReference type="Pfam" id="PF19219">
    <property type="entry name" value="CoV_NSP15_N"/>
    <property type="match status" value="1"/>
</dbReference>
<dbReference type="Pfam" id="PF19212">
    <property type="entry name" value="CoV_NSP2_C"/>
    <property type="match status" value="1"/>
</dbReference>
<dbReference type="Pfam" id="PF19211">
    <property type="entry name" value="CoV_NSP2_N"/>
    <property type="match status" value="1"/>
</dbReference>
<dbReference type="Pfam" id="PF19218">
    <property type="entry name" value="CoV_NSP3_C"/>
    <property type="match status" value="1"/>
</dbReference>
<dbReference type="Pfam" id="PF16348">
    <property type="entry name" value="CoV_NSP4_C"/>
    <property type="match status" value="1"/>
</dbReference>
<dbReference type="Pfam" id="PF19217">
    <property type="entry name" value="CoV_NSP4_N"/>
    <property type="match status" value="1"/>
</dbReference>
<dbReference type="Pfam" id="PF19213">
    <property type="entry name" value="CoV_NSP6"/>
    <property type="match status" value="1"/>
</dbReference>
<dbReference type="Pfam" id="PF08716">
    <property type="entry name" value="CoV_NSP7"/>
    <property type="match status" value="1"/>
</dbReference>
<dbReference type="Pfam" id="PF08717">
    <property type="entry name" value="CoV_NSP8"/>
    <property type="match status" value="1"/>
</dbReference>
<dbReference type="Pfam" id="PF08710">
    <property type="entry name" value="CoV_NSP9"/>
    <property type="match status" value="1"/>
</dbReference>
<dbReference type="Pfam" id="PF08715">
    <property type="entry name" value="CoV_peptidase"/>
    <property type="match status" value="1"/>
</dbReference>
<dbReference type="Pfam" id="PF06478">
    <property type="entry name" value="CoV_RPol_N"/>
    <property type="match status" value="1"/>
</dbReference>
<dbReference type="Pfam" id="PF01661">
    <property type="entry name" value="Macro"/>
    <property type="match status" value="1"/>
</dbReference>
<dbReference type="Pfam" id="PF05409">
    <property type="entry name" value="Peptidase_C30"/>
    <property type="match status" value="1"/>
</dbReference>
<dbReference type="Pfam" id="PF00680">
    <property type="entry name" value="RdRP_1"/>
    <property type="match status" value="1"/>
</dbReference>
<dbReference type="SMART" id="SM00506">
    <property type="entry name" value="A1pp"/>
    <property type="match status" value="1"/>
</dbReference>
<dbReference type="SUPFAM" id="SSF144246">
    <property type="entry name" value="Coronavirus NSP10-like"/>
    <property type="match status" value="1"/>
</dbReference>
<dbReference type="SUPFAM" id="SSF140367">
    <property type="entry name" value="Coronavirus NSP7-like"/>
    <property type="match status" value="1"/>
</dbReference>
<dbReference type="SUPFAM" id="SSF143076">
    <property type="entry name" value="Coronavirus NSP8-like"/>
    <property type="match status" value="1"/>
</dbReference>
<dbReference type="SUPFAM" id="SSF56672">
    <property type="entry name" value="DNA/RNA polymerases"/>
    <property type="match status" value="1"/>
</dbReference>
<dbReference type="SUPFAM" id="SSF142877">
    <property type="entry name" value="EndoU-like"/>
    <property type="match status" value="1"/>
</dbReference>
<dbReference type="SUPFAM" id="SSF52949">
    <property type="entry name" value="Macro domain-like"/>
    <property type="match status" value="1"/>
</dbReference>
<dbReference type="SUPFAM" id="SSF159936">
    <property type="entry name" value="NSP3A-like"/>
    <property type="match status" value="1"/>
</dbReference>
<dbReference type="SUPFAM" id="SSF52540">
    <property type="entry name" value="P-loop containing nucleoside triphosphate hydrolases"/>
    <property type="match status" value="1"/>
</dbReference>
<dbReference type="SUPFAM" id="SSF101816">
    <property type="entry name" value="Replicase NSP9"/>
    <property type="match status" value="1"/>
</dbReference>
<dbReference type="SUPFAM" id="SSF53335">
    <property type="entry name" value="S-adenosyl-L-methionine-dependent methyltransferases"/>
    <property type="match status" value="1"/>
</dbReference>
<dbReference type="SUPFAM" id="SSF160099">
    <property type="entry name" value="SARS Nsp1-like"/>
    <property type="match status" value="1"/>
</dbReference>
<dbReference type="SUPFAM" id="SSF50494">
    <property type="entry name" value="Trypsin-like serine proteases"/>
    <property type="match status" value="1"/>
</dbReference>
<dbReference type="PROSITE" id="PS51961">
    <property type="entry name" value="AV_NSP11N_COV_NSP15M"/>
    <property type="match status" value="1"/>
</dbReference>
<dbReference type="PROSITE" id="PS51963">
    <property type="entry name" value="BCOV_NSP1_C"/>
    <property type="match status" value="1"/>
</dbReference>
<dbReference type="PROSITE" id="PS51942">
    <property type="entry name" value="BCOV_NSP3C_C"/>
    <property type="match status" value="1"/>
</dbReference>
<dbReference type="PROSITE" id="PS51941">
    <property type="entry name" value="BCOV_NSP3C_M"/>
    <property type="match status" value="1"/>
</dbReference>
<dbReference type="PROSITE" id="PS51994">
    <property type="entry name" value="BCOV_NSP3E_G2M"/>
    <property type="match status" value="1"/>
</dbReference>
<dbReference type="PROSITE" id="PS51945">
    <property type="entry name" value="BCOV_NSP3E_NAB"/>
    <property type="match status" value="1"/>
</dbReference>
<dbReference type="PROSITE" id="PS51993">
    <property type="entry name" value="COV_3ECTO"/>
    <property type="match status" value="1"/>
</dbReference>
<dbReference type="PROSITE" id="PS51952">
    <property type="entry name" value="COV_EXON_MTASE_COACT"/>
    <property type="match status" value="1"/>
</dbReference>
<dbReference type="PROSITE" id="PS51954">
    <property type="entry name" value="COV_N7_MTASE"/>
    <property type="match status" value="1"/>
</dbReference>
<dbReference type="PROSITE" id="PS51962">
    <property type="entry name" value="COV_NSP1"/>
    <property type="match status" value="1"/>
</dbReference>
<dbReference type="PROSITE" id="PS52000">
    <property type="entry name" value="COV_NSP12_IF"/>
    <property type="match status" value="1"/>
</dbReference>
<dbReference type="PROSITE" id="PS51948">
    <property type="entry name" value="COV_NSP12_RDRP"/>
    <property type="match status" value="1"/>
</dbReference>
<dbReference type="PROSITE" id="PS51960">
    <property type="entry name" value="COV_NSP15_NTD"/>
    <property type="match status" value="1"/>
</dbReference>
<dbReference type="PROSITE" id="PS51991">
    <property type="entry name" value="COV_NSP2_C"/>
    <property type="match status" value="1"/>
</dbReference>
<dbReference type="PROSITE" id="PS51990">
    <property type="entry name" value="COV_NSP2_M"/>
    <property type="match status" value="1"/>
</dbReference>
<dbReference type="PROSITE" id="PS51989">
    <property type="entry name" value="COV_NSP2_N"/>
    <property type="match status" value="1"/>
</dbReference>
<dbReference type="PROSITE" id="PS51992">
    <property type="entry name" value="COV_NSP3_Y"/>
    <property type="match status" value="1"/>
</dbReference>
<dbReference type="PROSITE" id="PS51943">
    <property type="entry name" value="COV_NSP3A_UBL"/>
    <property type="match status" value="1"/>
</dbReference>
<dbReference type="PROSITE" id="PS51944">
    <property type="entry name" value="COV_NSP3D_UBL"/>
    <property type="match status" value="1"/>
</dbReference>
<dbReference type="PROSITE" id="PS51946">
    <property type="entry name" value="COV_NSP4C"/>
    <property type="match status" value="1"/>
</dbReference>
<dbReference type="PROSITE" id="PS51949">
    <property type="entry name" value="COV_NSP7"/>
    <property type="match status" value="1"/>
</dbReference>
<dbReference type="PROSITE" id="PS51950">
    <property type="entry name" value="COV_NSP8"/>
    <property type="match status" value="1"/>
</dbReference>
<dbReference type="PROSITE" id="PS51951">
    <property type="entry name" value="COV_NSP9_SSRNA_BD"/>
    <property type="match status" value="1"/>
</dbReference>
<dbReference type="PROSITE" id="PS51653">
    <property type="entry name" value="CV_ZBD"/>
    <property type="match status" value="1"/>
</dbReference>
<dbReference type="PROSITE" id="PS51442">
    <property type="entry name" value="M_PRO"/>
    <property type="match status" value="1"/>
</dbReference>
<dbReference type="PROSITE" id="PS51154">
    <property type="entry name" value="MACRO"/>
    <property type="match status" value="1"/>
</dbReference>
<dbReference type="PROSITE" id="PS51958">
    <property type="entry name" value="NENDOU"/>
    <property type="match status" value="1"/>
</dbReference>
<dbReference type="PROSITE" id="PS51947">
    <property type="entry name" value="NIRAN"/>
    <property type="match status" value="1"/>
</dbReference>
<dbReference type="PROSITE" id="PS51955">
    <property type="entry name" value="NIV_2_O_MTASE"/>
    <property type="match status" value="1"/>
</dbReference>
<dbReference type="PROSITE" id="PS51953">
    <property type="entry name" value="NIV_EXON"/>
    <property type="match status" value="1"/>
</dbReference>
<dbReference type="PROSITE" id="PS51124">
    <property type="entry name" value="PEPTIDASE_C16"/>
    <property type="match status" value="1"/>
</dbReference>
<dbReference type="PROSITE" id="PS51657">
    <property type="entry name" value="PSRV_HELICASE"/>
    <property type="match status" value="1"/>
</dbReference>
<dbReference type="PROSITE" id="PS50507">
    <property type="entry name" value="RDRP_SSRNA_POS"/>
    <property type="match status" value="1"/>
</dbReference>
<dbReference type="PROSITE" id="PS51940">
    <property type="entry name" value="SARS_NSP3C_N"/>
    <property type="match status" value="1"/>
</dbReference>
<name>R1AB_BCRP3</name>
<comment type="function">
    <text evidence="2">The replicase polyprotein of coronaviruses is a multifunctional protein: it contains the activities necessary for the transcription of negative stranded RNA, leader RNA, subgenomic mRNAs and progeny virion RNA as well as proteinases responsible for the cleavage of the polyprotein into functional products.</text>
</comment>
<comment type="function">
    <molecule>Host translation inhibitor nsp1</molecule>
    <text evidence="2">Inhibits host translation by interacting with the 40S ribosomal subunit. The nsp1-40S ribosome complex further induces an endonucleolytic cleavage near the 5'UTR of host mRNAs, targeting them for degradation. Viral mRNAs are not susceptible to nsp1-mediated endonucleolytic RNA cleavage thanks to the presence of a 5'-end leader sequence and are therefore protected from degradation. By suppressing host gene expression, nsp1 facilitates efficient viral gene expression in infected cells and evasion from host immune response.</text>
</comment>
<comment type="function">
    <molecule>Non-structural protein 2</molecule>
    <text evidence="2">May play a role in the modulation of host cell survival signaling pathway by interacting with host PHB and PHB2. Indeed, these two proteins play a role in maintaining the functional integrity of the mitochondria and protecting cells from various stresses.</text>
</comment>
<comment type="function">
    <molecule>Papain-like proteinase nsp3</molecule>
    <text evidence="2">Responsible for the cleavages located at the N-terminus of the replicase polyprotein. In addition, PL-PRO possesses a deubiquitinating/deISGylating activity and processes both 'Lys-48'- and 'Lys-63'-linked polyubiquitin chains from cellular substrates. Participates together with nsp4 in the assembly of virally-induced cytoplasmic double-membrane vesicles necessary for viral replication. Antagonizes innate immune induction of type I interferon by blocking the phosphorylation, dimerization and subsequent nuclear translocation of host IRF3. Also prevents host NF-kappa-B signaling.</text>
</comment>
<comment type="function">
    <molecule>Non-structural protein 4</molecule>
    <text evidence="2">Participates in the assembly of virally-induced cytoplasmic double-membrane vesicles necessary for viral replication.</text>
</comment>
<comment type="function">
    <molecule>3C-like proteinase nsp5</molecule>
    <text evidence="2 9">Cleaves the C-terminus of replicase polyprotein at 11 sites. Recognizes substrates containing the core sequence [ILMVF]-Q-|-[SGACN]. Also able to bind an ADP-ribose-1''-phosphate (ADRP).</text>
</comment>
<comment type="function">
    <molecule>Non-structural protein 6</molecule>
    <text evidence="2">Plays a role in the initial induction of autophagosomes from host endoplasmic reticulum. Later, limits the expansion of these phagosomes that are no longer able to deliver viral components to lysosomes.</text>
</comment>
<comment type="function">
    <molecule>Non-structural protein 7</molecule>
    <text evidence="2">Forms a hexadecamer with nsp8 (8 subunits of each) that may participate in viral replication by acting as a primase. Alternatively, may synthesize substantially longer products than oligonucleotide primers.</text>
</comment>
<comment type="function">
    <molecule>Non-structural protein 8</molecule>
    <text evidence="2">Forms a hexadecamer with nsp7 (8 subunits of each) that may participate in viral replication by acting as a primase. Alternatively, may synthesize substantially longer products than oligonucleotide primers.</text>
</comment>
<comment type="function">
    <molecule>Viral protein genome-linked nsp9</molecule>
    <text evidence="3">Forms a primer, NSP9-pU, which is utilized by the polymerase for the initiation of RNA chains. Interacts with ribosome signal recognition particle RNA (SRP). Together with NSP8, suppress protein integration into the cell membrane, thereby disrupting host immune defenses.</text>
</comment>
<comment type="function">
    <molecule>Non-structural protein 10</molecule>
    <text evidence="2">Plays a pivotal role in viral transcription by stimulating both nsp14 3'-5' exoribonuclease and nsp16 2'-O-methyltransferase activities. Therefore plays an essential role in viral mRNAs cap methylation.</text>
</comment>
<comment type="function">
    <molecule>RNA-directed RNA polymerase nsp12</molecule>
    <text evidence="3">RNA-directed RNA polymerase that catalyzes the transcription of viral genomic and subgenomic RNAs. Acts in complex with nsp7 and nsp8 to transcribe both the minus and positive strands of genomic RNA. The kinase-like NiRAN domain of NSP12 attaches one or more nucleotides to the amino terminus of NSP9, forming a covalent RNA-protein intermediate that serves as transcription/replication primer. Subgenomic RNAs (sgRNAs) are formed by discontinuous transcription: The polymerase has the ability to pause at transcription-regulating sequences (TRS) and jump to the leader TRS, resulting in a major deletion. This creates a series of subgenomic RNAs that are replicated, transcribed and translated. In addition, Nsp12 is a subunit of the viral RNA capping enzyme that catalyzes the RNA guanylyltransferase reaction for genomic and sub-genomic RNAs. Subsequently, the NiRAN domain transfers RNA to GDP, and forms the core cap structure GpppA-RNA.</text>
</comment>
<comment type="function">
    <molecule>Helicase nsp13</molecule>
    <text evidence="2">Multi-functional protein with a zinc-binding domain in N-terminus displaying RNA and DNA duplex-unwinding activities with 5' to 3' polarity. Activity of helicase is dependent on magnesium.</text>
</comment>
<comment type="function">
    <molecule>Guanine-N7 methyltransferase nsp14</molecule>
    <text evidence="2">Plays a role in viral RNA synthesis through two distinct activities. The N7-guanine methyltransferase activity plays a role in the formation of the cap structure GpppA-RNA. The proofreading exoribonuclease reduces the sensitivity of the virus to RNA mutagens during replication. This activity acts on both ssRNA and dsRNA in a 3'-5' direction.</text>
</comment>
<comment type="function">
    <molecule>Uridylate-specific endoribonuclease nsp15</molecule>
    <text evidence="2">Plays a role in viral transcription/replication and prevents the simultaneous activation of host cell dsRNA sensors, such as MDA5/IFIH1, OAS, and PKR (By similarity). Acts by degrading the 5'-polyuridines generated during replication of the poly(A) region of viral genomic and subgenomic RNAs. Catalyzes a two-step reaction in which a 2'3'-cyclic phosphate (2'3'-cP) is first generated by 2'-O transesterification, which is then hydrolyzed to a 3'-phosphate (3'-P) (By similarity). If not degraded, poly(U) RNA would hybridize with poly(A) RNA tails and activate host dsRNA sensors (By similarity).</text>
</comment>
<comment type="function">
    <molecule>2'-O-methyltransferase nsp16</molecule>
    <text evidence="2">Methyltransferase that mediates mRNA cap 2'-O-ribose methylation to the 5'-cap structure of viral mRNAs. N7-methyl guanosine cap is a prerequisite for binding of nsp16. Therefore plays an essential role in viral mRNAs cap methylation which is essential to evade immune system.</text>
</comment>
<comment type="catalytic activity">
    <molecule>RNA-directed RNA polymerase nsp12</molecule>
    <reaction evidence="8">
        <text>RNA(n) + a ribonucleoside 5'-triphosphate = RNA(n+1) + diphosphate</text>
        <dbReference type="Rhea" id="RHEA:21248"/>
        <dbReference type="Rhea" id="RHEA-COMP:14527"/>
        <dbReference type="Rhea" id="RHEA-COMP:17342"/>
        <dbReference type="ChEBI" id="CHEBI:33019"/>
        <dbReference type="ChEBI" id="CHEBI:61557"/>
        <dbReference type="ChEBI" id="CHEBI:140395"/>
        <dbReference type="EC" id="2.7.7.48"/>
    </reaction>
</comment>
<comment type="catalytic activity">
    <molecule>Helicase nsp13</molecule>
    <reaction>
        <text>ATP + H2O = ADP + phosphate + H(+)</text>
        <dbReference type="Rhea" id="RHEA:13065"/>
        <dbReference type="ChEBI" id="CHEBI:15377"/>
        <dbReference type="ChEBI" id="CHEBI:15378"/>
        <dbReference type="ChEBI" id="CHEBI:30616"/>
        <dbReference type="ChEBI" id="CHEBI:43474"/>
        <dbReference type="ChEBI" id="CHEBI:456216"/>
        <dbReference type="EC" id="3.6.4.12"/>
    </reaction>
</comment>
<comment type="catalytic activity">
    <molecule>Helicase nsp13</molecule>
    <reaction>
        <text>ATP + H2O = ADP + phosphate + H(+)</text>
        <dbReference type="Rhea" id="RHEA:13065"/>
        <dbReference type="ChEBI" id="CHEBI:15377"/>
        <dbReference type="ChEBI" id="CHEBI:15378"/>
        <dbReference type="ChEBI" id="CHEBI:30616"/>
        <dbReference type="ChEBI" id="CHEBI:43474"/>
        <dbReference type="ChEBI" id="CHEBI:456216"/>
        <dbReference type="EC" id="3.6.4.13"/>
    </reaction>
</comment>
<comment type="catalytic activity">
    <molecule>Papain-like proteinase nsp3</molecule>
    <reaction>
        <text>Thiol-dependent hydrolysis of ester, thioester, amide, peptide and isopeptide bonds formed by the C-terminal Gly of ubiquitin (a 76-residue protein attached to proteins as an intracellular targeting signal).</text>
        <dbReference type="EC" id="3.4.19.12"/>
    </reaction>
</comment>
<comment type="catalytic activity">
    <molecule>2'-O-methyltransferase nsp16</molecule>
    <reaction evidence="2">
        <text>a 5'-end (N(7)-methyl 5'-triphosphoguanosine)-ribonucleoside in mRNA + S-adenosyl-L-methionine = a 5'-end (N(7)-methyl 5'-triphosphoguanosine)-(2'-O-methyl-ribonucleoside) in mRNA + S-adenosyl-L-homocysteine + H(+)</text>
        <dbReference type="Rhea" id="RHEA:67020"/>
        <dbReference type="Rhea" id="RHEA-COMP:17167"/>
        <dbReference type="Rhea" id="RHEA-COMP:17168"/>
        <dbReference type="ChEBI" id="CHEBI:15378"/>
        <dbReference type="ChEBI" id="CHEBI:57856"/>
        <dbReference type="ChEBI" id="CHEBI:59789"/>
        <dbReference type="ChEBI" id="CHEBI:156461"/>
        <dbReference type="ChEBI" id="CHEBI:167609"/>
        <dbReference type="EC" id="2.1.1.57"/>
    </reaction>
</comment>
<comment type="catalytic activity">
    <molecule>Uridylate-specific endoribonuclease nsp15</molecule>
    <reaction evidence="2">
        <text>uridylyl-uridylyl-ribonucleotide-RNA = a 3'-end uridylyl-2',3'-cyclophospho-uridine-RNA + a 5'-end dephospho-ribonucleoside-RNA</text>
        <dbReference type="Rhea" id="RHEA:67732"/>
        <dbReference type="Rhea" id="RHEA-COMP:13936"/>
        <dbReference type="Rhea" id="RHEA-COMP:17334"/>
        <dbReference type="Rhea" id="RHEA-COMP:17335"/>
        <dbReference type="ChEBI" id="CHEBI:138284"/>
        <dbReference type="ChEBI" id="CHEBI:173079"/>
        <dbReference type="ChEBI" id="CHEBI:173080"/>
    </reaction>
</comment>
<comment type="catalytic activity">
    <molecule>RNA-directed RNA polymerase nsp12</molecule>
    <reaction evidence="3">
        <text>a 5'-end diphospho-ribonucleoside in mRNA + GTP + H(+) = a 5'-end (5'-triphosphoguanosine)-ribonucleoside in mRNA + diphosphate</text>
        <dbReference type="Rhea" id="RHEA:67012"/>
        <dbReference type="Rhea" id="RHEA-COMP:17165"/>
        <dbReference type="Rhea" id="RHEA-COMP:17166"/>
        <dbReference type="ChEBI" id="CHEBI:15378"/>
        <dbReference type="ChEBI" id="CHEBI:33019"/>
        <dbReference type="ChEBI" id="CHEBI:37565"/>
        <dbReference type="ChEBI" id="CHEBI:167616"/>
        <dbReference type="ChEBI" id="CHEBI:167617"/>
        <dbReference type="EC" id="2.7.7.50"/>
    </reaction>
    <physiologicalReaction direction="right-to-left" evidence="3">
        <dbReference type="Rhea" id="RHEA:67014"/>
    </physiologicalReaction>
</comment>
<comment type="catalytic activity">
    <molecule>Guanine-N7 methyltransferase nsp14</molecule>
    <reaction evidence="2">
        <text>a 5'-end (5'-triphosphoguanosine)-ribonucleoside in mRNA + S-adenosyl-L-methionine = a 5'-end (N(7)-methyl 5'-triphosphoguanosine)-ribonucleoside in mRNA + S-adenosyl-L-homocysteine</text>
        <dbReference type="Rhea" id="RHEA:67008"/>
        <dbReference type="Rhea" id="RHEA-COMP:17166"/>
        <dbReference type="Rhea" id="RHEA-COMP:17167"/>
        <dbReference type="ChEBI" id="CHEBI:57856"/>
        <dbReference type="ChEBI" id="CHEBI:59789"/>
        <dbReference type="ChEBI" id="CHEBI:156461"/>
        <dbReference type="ChEBI" id="CHEBI:167617"/>
        <dbReference type="EC" id="2.1.1.56"/>
    </reaction>
    <physiologicalReaction direction="left-to-right" evidence="2">
        <dbReference type="Rhea" id="RHEA:67009"/>
    </physiologicalReaction>
</comment>
<comment type="cofactor">
    <molecule>Uridylate-specific endoribonuclease nsp15</molecule>
    <cofactor evidence="2">
        <name>Mn(2+)</name>
        <dbReference type="ChEBI" id="CHEBI:29035"/>
    </cofactor>
    <text evidence="2">Likely affects Nsp15 binding to RNA.</text>
</comment>
<comment type="cofactor">
    <molecule>RNA-directed RNA polymerase nsp12</molecule>
    <cofactor evidence="3">
        <name>Mg(2+)</name>
        <dbReference type="ChEBI" id="CHEBI:18420"/>
    </cofactor>
</comment>
<comment type="subunit">
    <molecule>Non-structural protein 2</molecule>
    <text evidence="2">Interacts with host PHB and PHB2.</text>
</comment>
<comment type="subunit">
    <molecule>Non-structural protein 4</molecule>
    <text evidence="2">Interacts with papain-like protease nsp3 and non-structural protein 6.</text>
</comment>
<comment type="subunit">
    <molecule>3C-like proteinase nsp5</molecule>
    <text evidence="2">Monomer. Homodimer. Only the homodimer shows catalytic activity.</text>
</comment>
<comment type="subunit">
    <molecule>Non-structural protein 7</molecule>
    <text evidence="3">Interacts with nsp8 and nsp12 to form the replication-transcription complex (RTC): nsp12, nsp7, two subunits of nsp8, and up to two subunits of nsp13.</text>
</comment>
<comment type="subunit">
    <molecule>Non-structural protein 8</molecule>
    <text evidence="3">Interacts with nsp7, nsp13 and nsp12 to form the replication-transcription complex (RTC): nsp12, nsp7, two subunits of nsp8, and up to two subunits of nsp13.</text>
</comment>
<comment type="subunit">
    <molecule>Viral protein genome-linked nsp9</molecule>
    <text evidence="3">Interacts with nsp12.</text>
</comment>
<comment type="subunit">
    <molecule>Non-structural protein 10</molecule>
    <text evidence="3">Interacts with proofreading exoribonuclease nsp14 and 2'-O-methyltransferase nsp16; these interactions enhance nsp14 and nsp16 enzymatic activities.</text>
</comment>
<comment type="subunit">
    <molecule>RNA-directed RNA polymerase nsp12</molecule>
    <text evidence="3">Interacts with nsp7 and nsp8 to form the replication-transcription complex (RTC): nsp12, nsp7, two subunits of nsp8, and up to two subunits of nsp13. Interacts with nsp9.</text>
</comment>
<comment type="subunit">
    <molecule>Helicase nsp13</molecule>
    <text evidence="3">Interacts with nsp8 to form the replication-transcription complex (RTC): nsp12, nsp7, two subunits of nsp8, and up to two subunits of nsp13.</text>
</comment>
<comment type="subcellular location">
    <molecule>Papain-like proteinase nsp3</molecule>
    <subcellularLocation>
        <location>Host membrane</location>
        <topology>Multi-pass membrane protein</topology>
    </subcellularLocation>
    <subcellularLocation>
        <location evidence="2">Host cytoplasm</location>
    </subcellularLocation>
</comment>
<comment type="subcellular location">
    <molecule>Non-structural protein 4</molecule>
    <subcellularLocation>
        <location>Host membrane</location>
        <topology>Multi-pass membrane protein</topology>
    </subcellularLocation>
    <subcellularLocation>
        <location>Host cytoplasm</location>
    </subcellularLocation>
    <text evidence="2">Localizes in virally-induced cytoplasmic double-membrane vesicles.</text>
</comment>
<comment type="subcellular location">
    <molecule>Non-structural protein 6</molecule>
    <subcellularLocation>
        <location evidence="35">Host membrane</location>
        <topology evidence="35">Multi-pass membrane protein</topology>
    </subcellularLocation>
</comment>
<comment type="subcellular location">
    <molecule>Non-structural protein 7</molecule>
    <subcellularLocation>
        <location evidence="1">Host cytoplasm</location>
        <location evidence="1">Host perinuclear region</location>
    </subcellularLocation>
    <text evidence="1">nsp7, nsp8, nsp9 and nsp10 are localized in cytoplasmic foci, largely perinuclear. Late in infection, they merge into confluent complexes (By similarity).</text>
</comment>
<comment type="subcellular location">
    <molecule>Non-structural protein 8</molecule>
    <subcellularLocation>
        <location evidence="1">Host cytoplasm</location>
        <location evidence="1">Host perinuclear region</location>
    </subcellularLocation>
    <text evidence="1">nsp7, nsp8, nsp9 and nsp10 are localized in cytoplasmic foci, largely perinuclear. Late in infection, they merge into confluent complexes (By similarity).</text>
</comment>
<comment type="subcellular location">
    <molecule>Viral protein genome-linked nsp9</molecule>
    <subcellularLocation>
        <location evidence="1">Host cytoplasm</location>
        <location evidence="1">Host perinuclear region</location>
    </subcellularLocation>
    <text evidence="1">nsp7, nsp8, nsp9 and nsp10 are localized in cytoplasmic foci, largely perinuclear. Late in infection, they merge into confluent complexes (By similarity).</text>
</comment>
<comment type="subcellular location">
    <molecule>Non-structural protein 10</molecule>
    <subcellularLocation>
        <location evidence="1">Host cytoplasm</location>
        <location evidence="1">Host perinuclear region</location>
    </subcellularLocation>
    <text evidence="1">nsp7, nsp8, nsp9 and nsp10 are localized in cytoplasmic foci, largely perinuclear. Late in infection, they merge into confluent complexes (By similarity).</text>
</comment>
<comment type="subcellular location">
    <molecule>Helicase nsp13</molecule>
    <subcellularLocation>
        <location evidence="35">Host endoplasmic reticulum-Golgi intermediate compartment</location>
    </subcellularLocation>
    <text evidence="1">The helicase interacts with the N protein in membranous complexes and colocalizes with sites of synthesis of new viral RNA.</text>
</comment>
<comment type="subcellular location">
    <molecule>Uridylate-specific endoribonuclease nsp15</molecule>
    <subcellularLocation>
        <location evidence="1">Host cytoplasm</location>
        <location evidence="1">Host perinuclear region</location>
    </subcellularLocation>
</comment>
<comment type="alternative products">
    <event type="ribosomal frameshifting"/>
    <isoform>
        <id>P0C6W6-1</id>
        <name>Replicase polyprotein 1ab</name>
        <name>pp1ab</name>
        <sequence type="displayed"/>
    </isoform>
    <isoform>
        <id>P0C6T7-1</id>
        <name>Replicase polyprotein 1a</name>
        <name>pp1a</name>
        <name>ORF1a polyprotein</name>
        <sequence type="external"/>
    </isoform>
</comment>
<comment type="domain">
    <text evidence="1">The hydrophobic domains (HD) could mediate the membrane association of the replication complex and thereby alter the architecture of the host cell membrane.</text>
</comment>
<comment type="PTM">
    <text evidence="1">Specific enzymatic cleavages in vivo by its own proteases yield mature proteins. 3CL-PRO and PL-PRO proteinases are autocatalytically processed (By similarity).</text>
</comment>
<comment type="miscellaneous">
    <text>Bat coronavirus rp3 is highly similar to SARS-CoV (SARS-like).</text>
</comment>
<comment type="miscellaneous">
    <molecule>Isoform Replicase polyprotein 1ab</molecule>
    <text>Produced by -1 ribosomal frameshifting at the 1a-1b genes boundary.</text>
</comment>
<comment type="similarity">
    <text evidence="35">Belongs to the coronaviruses polyprotein 1ab family.</text>
</comment>
<comment type="sequence caution" evidence="35">
    <conflict type="erroneous gene model prediction">
        <sequence resource="EMBL-CDS" id="AAZ67050"/>
    </conflict>
</comment>
<comment type="sequence caution" evidence="35">
    <conflict type="erroneous gene model prediction">
        <sequence resource="EMBL-CDS" id="AAZ67051"/>
    </conflict>
</comment>